<dbReference type="EMBL" id="FJ222241">
    <property type="protein sequence ID" value="ACI46648.1"/>
    <property type="molecule type" value="mRNA"/>
</dbReference>
<dbReference type="EMBL" id="AK290661">
    <property type="protein sequence ID" value="BAF83350.1"/>
    <property type="molecule type" value="mRNA"/>
</dbReference>
<dbReference type="EMBL" id="AC138517">
    <property type="status" value="NOT_ANNOTATED_CDS"/>
    <property type="molecule type" value="Genomic_DNA"/>
</dbReference>
<dbReference type="EMBL" id="BC047779">
    <property type="protein sequence ID" value="AAH47779.1"/>
    <property type="molecule type" value="mRNA"/>
</dbReference>
<dbReference type="CCDS" id="CCDS4215.1"/>
<dbReference type="RefSeq" id="NP_938023.1">
    <property type="nucleotide sequence ID" value="NM_198282.4"/>
</dbReference>
<dbReference type="PDB" id="4EF4">
    <property type="method" value="X-ray"/>
    <property type="resolution" value="2.15 A"/>
    <property type="chains" value="A/B=139-379"/>
</dbReference>
<dbReference type="PDB" id="4EF5">
    <property type="method" value="X-ray"/>
    <property type="resolution" value="2.45 A"/>
    <property type="chains" value="A=139-379"/>
</dbReference>
<dbReference type="PDB" id="4EMT">
    <property type="method" value="X-ray"/>
    <property type="resolution" value="1.50 A"/>
    <property type="chains" value="A/B=155-341"/>
</dbReference>
<dbReference type="PDB" id="4EMU">
    <property type="method" value="X-ray"/>
    <property type="resolution" value="1.90 A"/>
    <property type="chains" value="A/B=155-341"/>
</dbReference>
<dbReference type="PDB" id="4F5D">
    <property type="method" value="X-ray"/>
    <property type="resolution" value="3.00 A"/>
    <property type="chains" value="A/B=141-379"/>
</dbReference>
<dbReference type="PDB" id="4F5E">
    <property type="method" value="X-ray"/>
    <property type="resolution" value="2.60 A"/>
    <property type="chains" value="A=141-379"/>
</dbReference>
<dbReference type="PDB" id="4F5W">
    <property type="method" value="X-ray"/>
    <property type="resolution" value="2.20 A"/>
    <property type="chains" value="A=149-379"/>
</dbReference>
<dbReference type="PDB" id="4F5Y">
    <property type="method" value="X-ray"/>
    <property type="resolution" value="2.40 A"/>
    <property type="chains" value="A/B=149-379"/>
</dbReference>
<dbReference type="PDB" id="4F9E">
    <property type="method" value="X-ray"/>
    <property type="resolution" value="2.75 A"/>
    <property type="chains" value="A=139-379"/>
</dbReference>
<dbReference type="PDB" id="4F9G">
    <property type="method" value="X-ray"/>
    <property type="resolution" value="2.95 A"/>
    <property type="chains" value="A/C=139-379"/>
</dbReference>
<dbReference type="PDB" id="4KSY">
    <property type="method" value="X-ray"/>
    <property type="resolution" value="1.88 A"/>
    <property type="chains" value="A=138-379"/>
</dbReference>
<dbReference type="PDB" id="4LOH">
    <property type="method" value="X-ray"/>
    <property type="resolution" value="2.25 A"/>
    <property type="chains" value="A/B=155-341"/>
</dbReference>
<dbReference type="PDB" id="4LOI">
    <property type="method" value="X-ray"/>
    <property type="resolution" value="1.89 A"/>
    <property type="chains" value="A/B=155-341"/>
</dbReference>
<dbReference type="PDB" id="4QXO">
    <property type="method" value="X-ray"/>
    <property type="resolution" value="1.88 A"/>
    <property type="chains" value="A=155-341"/>
</dbReference>
<dbReference type="PDB" id="4QXP">
    <property type="method" value="X-ray"/>
    <property type="resolution" value="2.51 A"/>
    <property type="chains" value="A/B=155-341"/>
</dbReference>
<dbReference type="PDB" id="4QXQ">
    <property type="method" value="X-ray"/>
    <property type="resolution" value="2.42 A"/>
    <property type="chains" value="A/B=155-341"/>
</dbReference>
<dbReference type="PDB" id="4QXR">
    <property type="method" value="X-ray"/>
    <property type="resolution" value="2.37 A"/>
    <property type="chains" value="A/B=155-341"/>
</dbReference>
<dbReference type="PDB" id="5BQX">
    <property type="method" value="X-ray"/>
    <property type="resolution" value="2.00 A"/>
    <property type="chains" value="A=138-379"/>
</dbReference>
<dbReference type="PDB" id="5JEJ">
    <property type="method" value="X-ray"/>
    <property type="resolution" value="2.00 A"/>
    <property type="chains" value="C/D/E=342-377"/>
</dbReference>
<dbReference type="PDB" id="6CFF">
    <property type="method" value="X-ray"/>
    <property type="resolution" value="2.40 A"/>
    <property type="chains" value="A=139-379"/>
</dbReference>
<dbReference type="PDB" id="6CY7">
    <property type="method" value="X-ray"/>
    <property type="resolution" value="2.20 A"/>
    <property type="chains" value="A=139-379"/>
</dbReference>
<dbReference type="PDB" id="6DNK">
    <property type="method" value="X-ray"/>
    <property type="resolution" value="1.95 A"/>
    <property type="chains" value="A=154-337"/>
</dbReference>
<dbReference type="PDB" id="6DXG">
    <property type="method" value="X-ray"/>
    <property type="resolution" value="1.91 A"/>
    <property type="chains" value="A=153-343"/>
</dbReference>
<dbReference type="PDB" id="6DXL">
    <property type="method" value="X-ray"/>
    <property type="resolution" value="2.45 A"/>
    <property type="chains" value="A/B=153-343"/>
</dbReference>
<dbReference type="PDB" id="6MX0">
    <property type="method" value="X-ray"/>
    <property type="resolution" value="1.73 A"/>
    <property type="chains" value="A/B=155-341"/>
</dbReference>
<dbReference type="PDB" id="6MX3">
    <property type="method" value="X-ray"/>
    <property type="resolution" value="1.36 A"/>
    <property type="chains" value="A/B=155-341"/>
</dbReference>
<dbReference type="PDB" id="6MXE">
    <property type="method" value="X-ray"/>
    <property type="resolution" value="2.47 A"/>
    <property type="chains" value="A/B=155-341"/>
</dbReference>
<dbReference type="PDB" id="6NT5">
    <property type="method" value="EM"/>
    <property type="resolution" value="4.10 A"/>
    <property type="chains" value="A/B=1-379"/>
</dbReference>
<dbReference type="PDB" id="6O8B">
    <property type="method" value="X-ray"/>
    <property type="resolution" value="3.40 A"/>
    <property type="chains" value="D/E=155-379"/>
</dbReference>
<dbReference type="PDB" id="6O8C">
    <property type="method" value="X-ray"/>
    <property type="resolution" value="3.17 A"/>
    <property type="chains" value="D/E=342-379"/>
</dbReference>
<dbReference type="PDB" id="6S26">
    <property type="method" value="X-ray"/>
    <property type="resolution" value="2.05 A"/>
    <property type="chains" value="A/B=140-343"/>
</dbReference>
<dbReference type="PDB" id="6S27">
    <property type="method" value="X-ray"/>
    <property type="resolution" value="2.80 A"/>
    <property type="chains" value="A=140-343"/>
</dbReference>
<dbReference type="PDB" id="6S86">
    <property type="method" value="X-ray"/>
    <property type="resolution" value="2.60 A"/>
    <property type="chains" value="A/B=140-343"/>
</dbReference>
<dbReference type="PDB" id="6UKM">
    <property type="method" value="X-ray"/>
    <property type="resolution" value="1.74 A"/>
    <property type="chains" value="A=155-341"/>
</dbReference>
<dbReference type="PDB" id="6UKU">
    <property type="method" value="X-ray"/>
    <property type="resolution" value="1.68 A"/>
    <property type="chains" value="A=155-341"/>
</dbReference>
<dbReference type="PDB" id="6UKV">
    <property type="method" value="X-ray"/>
    <property type="resolution" value="1.83 A"/>
    <property type="chains" value="A/B=155-341"/>
</dbReference>
<dbReference type="PDB" id="6UKW">
    <property type="method" value="X-ray"/>
    <property type="resolution" value="1.97 A"/>
    <property type="chains" value="A/B=155-341"/>
</dbReference>
<dbReference type="PDB" id="6UKX">
    <property type="method" value="X-ray"/>
    <property type="resolution" value="1.93 A"/>
    <property type="chains" value="A/B=155-341"/>
</dbReference>
<dbReference type="PDB" id="6UKY">
    <property type="method" value="X-ray"/>
    <property type="resolution" value="1.95 A"/>
    <property type="chains" value="A=155-341"/>
</dbReference>
<dbReference type="PDB" id="6UKZ">
    <property type="method" value="X-ray"/>
    <property type="resolution" value="1.52 A"/>
    <property type="chains" value="A/B=155-341"/>
</dbReference>
<dbReference type="PDB" id="6UL0">
    <property type="method" value="X-ray"/>
    <property type="resolution" value="1.76 A"/>
    <property type="chains" value="A=155-341"/>
</dbReference>
<dbReference type="PDB" id="6XF3">
    <property type="method" value="X-ray"/>
    <property type="resolution" value="2.38 A"/>
    <property type="chains" value="A/B=155-341"/>
</dbReference>
<dbReference type="PDB" id="6XF4">
    <property type="method" value="X-ray"/>
    <property type="resolution" value="2.77 A"/>
    <property type="chains" value="A/B=155-341"/>
</dbReference>
<dbReference type="PDB" id="6XNP">
    <property type="method" value="X-ray"/>
    <property type="resolution" value="1.77 A"/>
    <property type="chains" value="A/B=155-341"/>
</dbReference>
<dbReference type="PDB" id="6Y99">
    <property type="method" value="X-ray"/>
    <property type="resolution" value="2.98 A"/>
    <property type="chains" value="A=140-343"/>
</dbReference>
<dbReference type="PDB" id="6YDB">
    <property type="method" value="X-ray"/>
    <property type="resolution" value="2.80 A"/>
    <property type="chains" value="A=140-343"/>
</dbReference>
<dbReference type="PDB" id="6YDZ">
    <property type="method" value="X-ray"/>
    <property type="resolution" value="2.90 A"/>
    <property type="chains" value="A=140-343"/>
</dbReference>
<dbReference type="PDB" id="6YEA">
    <property type="method" value="X-ray"/>
    <property type="resolution" value="2.81 A"/>
    <property type="chains" value="A=140-343"/>
</dbReference>
<dbReference type="PDB" id="6YWA">
    <property type="method" value="X-ray"/>
    <property type="resolution" value="2.31 A"/>
    <property type="chains" value="A/B=140-343"/>
</dbReference>
<dbReference type="PDB" id="6YWB">
    <property type="method" value="X-ray"/>
    <property type="resolution" value="2.50 A"/>
    <property type="chains" value="A=140-343"/>
</dbReference>
<dbReference type="PDB" id="6Z0Z">
    <property type="method" value="X-ray"/>
    <property type="resolution" value="2.50 A"/>
    <property type="chains" value="A=140-343"/>
</dbReference>
<dbReference type="PDB" id="6Z15">
    <property type="method" value="X-ray"/>
    <property type="resolution" value="2.50 A"/>
    <property type="chains" value="A=140-343"/>
</dbReference>
<dbReference type="PDB" id="7A90">
    <property type="method" value="X-ray"/>
    <property type="resolution" value="3.19 A"/>
    <property type="chains" value="A=140-343"/>
</dbReference>
<dbReference type="PDB" id="7KVX">
    <property type="method" value="X-ray"/>
    <property type="resolution" value="2.48 A"/>
    <property type="chains" value="A=140-379"/>
</dbReference>
<dbReference type="PDB" id="7KVZ">
    <property type="method" value="X-ray"/>
    <property type="resolution" value="2.35 A"/>
    <property type="chains" value="A=140-379"/>
</dbReference>
<dbReference type="PDB" id="7KW1">
    <property type="method" value="X-ray"/>
    <property type="resolution" value="1.80 A"/>
    <property type="chains" value="A=140-379"/>
</dbReference>
<dbReference type="PDB" id="7MHC">
    <property type="method" value="X-ray"/>
    <property type="resolution" value="2.32 A"/>
    <property type="chains" value="A=154-341"/>
</dbReference>
<dbReference type="PDB" id="7OB3">
    <property type="method" value="X-ray"/>
    <property type="resolution" value="2.30 A"/>
    <property type="chains" value="A=140-343"/>
</dbReference>
<dbReference type="PDB" id="7Q3B">
    <property type="method" value="X-ray"/>
    <property type="resolution" value="2.56 A"/>
    <property type="chains" value="A=140-343"/>
</dbReference>
<dbReference type="PDB" id="7Q85">
    <property type="method" value="X-ray"/>
    <property type="resolution" value="2.36 A"/>
    <property type="chains" value="A=140-343"/>
</dbReference>
<dbReference type="PDB" id="7R4H">
    <property type="method" value="EM"/>
    <property type="resolution" value="2.34 A"/>
    <property type="chains" value="L=359-367"/>
</dbReference>
<dbReference type="PDB" id="7SHO">
    <property type="method" value="X-ray"/>
    <property type="resolution" value="2.25 A"/>
    <property type="chains" value="B=155-341"/>
</dbReference>
<dbReference type="PDB" id="7SHP">
    <property type="method" value="X-ray"/>
    <property type="resolution" value="2.20 A"/>
    <property type="chains" value="A/B/C/D=155-341"/>
</dbReference>
<dbReference type="PDB" id="7SII">
    <property type="method" value="EM"/>
    <property type="resolution" value="3.45 A"/>
    <property type="chains" value="A/B/C/D=1-344"/>
</dbReference>
<dbReference type="PDB" id="7SSM">
    <property type="method" value="X-ray"/>
    <property type="resolution" value="1.96 A"/>
    <property type="chains" value="A=155-341"/>
</dbReference>
<dbReference type="PDB" id="7T9U">
    <property type="method" value="X-ray"/>
    <property type="resolution" value="2.46 A"/>
    <property type="chains" value="A=149-345"/>
</dbReference>
<dbReference type="PDB" id="7T9V">
    <property type="method" value="X-ray"/>
    <property type="resolution" value="2.68 A"/>
    <property type="chains" value="A/B=149-345"/>
</dbReference>
<dbReference type="PDB" id="7X9P">
    <property type="method" value="X-ray"/>
    <property type="resolution" value="2.70 A"/>
    <property type="chains" value="A=150-379"/>
</dbReference>
<dbReference type="PDB" id="7X9Q">
    <property type="method" value="X-ray"/>
    <property type="resolution" value="2.40 A"/>
    <property type="chains" value="A=150-379"/>
</dbReference>
<dbReference type="PDB" id="7ZKU">
    <property type="method" value="X-ray"/>
    <property type="resolution" value="1.70 A"/>
    <property type="chains" value="A/B=140-343"/>
</dbReference>
<dbReference type="PDB" id="7ZV0">
    <property type="method" value="X-ray"/>
    <property type="resolution" value="2.31 A"/>
    <property type="chains" value="A=140-343"/>
</dbReference>
<dbReference type="PDB" id="7ZVK">
    <property type="method" value="X-ray"/>
    <property type="resolution" value="2.83 A"/>
    <property type="chains" value="A/B=140-343"/>
</dbReference>
<dbReference type="PDB" id="7ZWL">
    <property type="method" value="X-ray"/>
    <property type="resolution" value="2.00 A"/>
    <property type="chains" value="A/B=140-343"/>
</dbReference>
<dbReference type="PDB" id="7ZXB">
    <property type="method" value="X-ray"/>
    <property type="resolution" value="3.00 A"/>
    <property type="chains" value="A=140-343"/>
</dbReference>
<dbReference type="PDB" id="8A2H">
    <property type="method" value="X-ray"/>
    <property type="resolution" value="2.69 A"/>
    <property type="chains" value="A/B=140-379"/>
</dbReference>
<dbReference type="PDB" id="8A2I">
    <property type="method" value="X-ray"/>
    <property type="resolution" value="2.16 A"/>
    <property type="chains" value="A/B=140-379"/>
</dbReference>
<dbReference type="PDB" id="8A2J">
    <property type="method" value="X-ray"/>
    <property type="resolution" value="2.32 A"/>
    <property type="chains" value="A/B=140-379"/>
</dbReference>
<dbReference type="PDB" id="8A2K">
    <property type="method" value="X-ray"/>
    <property type="resolution" value="1.89 A"/>
    <property type="chains" value="A/B=140-379"/>
</dbReference>
<dbReference type="PDB" id="8A2X">
    <property type="method" value="X-ray"/>
    <property type="resolution" value="3.00 A"/>
    <property type="chains" value="A=140-343"/>
</dbReference>
<dbReference type="PDB" id="8B2J">
    <property type="method" value="X-ray"/>
    <property type="resolution" value="2.17 A"/>
    <property type="chains" value="A/B=138-379"/>
</dbReference>
<dbReference type="PDB" id="8FLK">
    <property type="method" value="EM"/>
    <property type="resolution" value="4.00 A"/>
    <property type="chains" value="A/B/C/D=1-344"/>
</dbReference>
<dbReference type="PDB" id="8FLM">
    <property type="method" value="EM"/>
    <property type="resolution" value="2.90 A"/>
    <property type="chains" value="A/B/C/D=1-344"/>
</dbReference>
<dbReference type="PDB" id="8GJX">
    <property type="method" value="X-ray"/>
    <property type="resolution" value="2.60 A"/>
    <property type="chains" value="A/B=154-341"/>
</dbReference>
<dbReference type="PDB" id="8GSZ">
    <property type="method" value="EM"/>
    <property type="resolution" value="3.65 A"/>
    <property type="chains" value="A/B=1-379"/>
</dbReference>
<dbReference type="PDB" id="8GT6">
    <property type="method" value="EM"/>
    <property type="resolution" value="3.47 A"/>
    <property type="chains" value="A/B=1-379"/>
</dbReference>
<dbReference type="PDB" id="8IK3">
    <property type="method" value="EM"/>
    <property type="resolution" value="3.30 A"/>
    <property type="chains" value="A/B/C/D/E/F/G/H=1-379"/>
</dbReference>
<dbReference type="PDB" id="8ORW">
    <property type="method" value="X-ray"/>
    <property type="resolution" value="2.95 A"/>
    <property type="chains" value="A=140-343"/>
</dbReference>
<dbReference type="PDB" id="8P45">
    <property type="method" value="X-ray"/>
    <property type="resolution" value="3.23 A"/>
    <property type="chains" value="A=140-343"/>
</dbReference>
<dbReference type="PDB" id="8STH">
    <property type="method" value="X-ray"/>
    <property type="resolution" value="1.97 A"/>
    <property type="chains" value="A=153-339"/>
</dbReference>
<dbReference type="PDB" id="8STI">
    <property type="method" value="X-ray"/>
    <property type="resolution" value="1.72 A"/>
    <property type="chains" value="A=153-339"/>
</dbReference>
<dbReference type="PDB" id="8T5K">
    <property type="method" value="X-ray"/>
    <property type="resolution" value="1.95 A"/>
    <property type="chains" value="B=154-341"/>
</dbReference>
<dbReference type="PDB" id="8T5L">
    <property type="method" value="X-ray"/>
    <property type="resolution" value="2.01 A"/>
    <property type="chains" value="B=154-341"/>
</dbReference>
<dbReference type="PDB" id="9IJN">
    <property type="method" value="X-ray"/>
    <property type="resolution" value="1.81 A"/>
    <property type="chains" value="A=154-341"/>
</dbReference>
<dbReference type="PDBsum" id="4EF4"/>
<dbReference type="PDBsum" id="4EF5"/>
<dbReference type="PDBsum" id="4EMT"/>
<dbReference type="PDBsum" id="4EMU"/>
<dbReference type="PDBsum" id="4F5D"/>
<dbReference type="PDBsum" id="4F5E"/>
<dbReference type="PDBsum" id="4F5W"/>
<dbReference type="PDBsum" id="4F5Y"/>
<dbReference type="PDBsum" id="4F9E"/>
<dbReference type="PDBsum" id="4F9G"/>
<dbReference type="PDBsum" id="4KSY"/>
<dbReference type="PDBsum" id="4LOH"/>
<dbReference type="PDBsum" id="4LOI"/>
<dbReference type="PDBsum" id="4QXO"/>
<dbReference type="PDBsum" id="4QXP"/>
<dbReference type="PDBsum" id="4QXQ"/>
<dbReference type="PDBsum" id="4QXR"/>
<dbReference type="PDBsum" id="5BQX"/>
<dbReference type="PDBsum" id="5JEJ"/>
<dbReference type="PDBsum" id="6CFF"/>
<dbReference type="PDBsum" id="6CY7"/>
<dbReference type="PDBsum" id="6DNK"/>
<dbReference type="PDBsum" id="6DXG"/>
<dbReference type="PDBsum" id="6DXL"/>
<dbReference type="PDBsum" id="6MX0"/>
<dbReference type="PDBsum" id="6MX3"/>
<dbReference type="PDBsum" id="6MXE"/>
<dbReference type="PDBsum" id="6NT5"/>
<dbReference type="PDBsum" id="6O8B"/>
<dbReference type="PDBsum" id="6O8C"/>
<dbReference type="PDBsum" id="6S26"/>
<dbReference type="PDBsum" id="6S27"/>
<dbReference type="PDBsum" id="6S86"/>
<dbReference type="PDBsum" id="6UKM"/>
<dbReference type="PDBsum" id="6UKU"/>
<dbReference type="PDBsum" id="6UKV"/>
<dbReference type="PDBsum" id="6UKW"/>
<dbReference type="PDBsum" id="6UKX"/>
<dbReference type="PDBsum" id="6UKY"/>
<dbReference type="PDBsum" id="6UKZ"/>
<dbReference type="PDBsum" id="6UL0"/>
<dbReference type="PDBsum" id="6XF3"/>
<dbReference type="PDBsum" id="6XF4"/>
<dbReference type="PDBsum" id="6XNP"/>
<dbReference type="PDBsum" id="6Y99"/>
<dbReference type="PDBsum" id="6YDB"/>
<dbReference type="PDBsum" id="6YDZ"/>
<dbReference type="PDBsum" id="6YEA"/>
<dbReference type="PDBsum" id="6YWA"/>
<dbReference type="PDBsum" id="6YWB"/>
<dbReference type="PDBsum" id="6Z0Z"/>
<dbReference type="PDBsum" id="6Z15"/>
<dbReference type="PDBsum" id="7A90"/>
<dbReference type="PDBsum" id="7KVX"/>
<dbReference type="PDBsum" id="7KVZ"/>
<dbReference type="PDBsum" id="7KW1"/>
<dbReference type="PDBsum" id="7MHC"/>
<dbReference type="PDBsum" id="7OB3"/>
<dbReference type="PDBsum" id="7Q3B"/>
<dbReference type="PDBsum" id="7Q85"/>
<dbReference type="PDBsum" id="7R4H"/>
<dbReference type="PDBsum" id="7SHO"/>
<dbReference type="PDBsum" id="7SHP"/>
<dbReference type="PDBsum" id="7SII"/>
<dbReference type="PDBsum" id="7SSM"/>
<dbReference type="PDBsum" id="7T9U"/>
<dbReference type="PDBsum" id="7T9V"/>
<dbReference type="PDBsum" id="7X9P"/>
<dbReference type="PDBsum" id="7X9Q"/>
<dbReference type="PDBsum" id="7ZKU"/>
<dbReference type="PDBsum" id="7ZV0"/>
<dbReference type="PDBsum" id="7ZVK"/>
<dbReference type="PDBsum" id="7ZWL"/>
<dbReference type="PDBsum" id="7ZXB"/>
<dbReference type="PDBsum" id="8A2H"/>
<dbReference type="PDBsum" id="8A2I"/>
<dbReference type="PDBsum" id="8A2J"/>
<dbReference type="PDBsum" id="8A2K"/>
<dbReference type="PDBsum" id="8A2X"/>
<dbReference type="PDBsum" id="8B2J"/>
<dbReference type="PDBsum" id="8FLK"/>
<dbReference type="PDBsum" id="8FLM"/>
<dbReference type="PDBsum" id="8GJX"/>
<dbReference type="PDBsum" id="8GSZ"/>
<dbReference type="PDBsum" id="8GT6"/>
<dbReference type="PDBsum" id="8IK3"/>
<dbReference type="PDBsum" id="8ORW"/>
<dbReference type="PDBsum" id="8P45"/>
<dbReference type="PDBsum" id="8STH"/>
<dbReference type="PDBsum" id="8STI"/>
<dbReference type="PDBsum" id="8T5K"/>
<dbReference type="PDBsum" id="8T5L"/>
<dbReference type="PDBsum" id="9IJN"/>
<dbReference type="EMDB" id="EMD-14312"/>
<dbReference type="EMDB" id="EMD-25142"/>
<dbReference type="EMDB" id="EMD-29281"/>
<dbReference type="EMDB" id="EMD-29282"/>
<dbReference type="EMDB" id="EMD-34244"/>
<dbReference type="EMDB" id="EMD-34245"/>
<dbReference type="SMR" id="Q86WV6"/>
<dbReference type="BioGRID" id="130988">
    <property type="interactions" value="117"/>
</dbReference>
<dbReference type="ComplexPortal" id="CPX-2127">
    <property type="entry name" value="STING complex"/>
</dbReference>
<dbReference type="ComplexPortal" id="CPX-6018">
    <property type="entry name" value="STING-TRAF3-TBK1 complex"/>
</dbReference>
<dbReference type="CORUM" id="Q86WV6"/>
<dbReference type="DIP" id="DIP-48847N"/>
<dbReference type="FunCoup" id="Q86WV6">
    <property type="interactions" value="442"/>
</dbReference>
<dbReference type="IntAct" id="Q86WV6">
    <property type="interactions" value="92"/>
</dbReference>
<dbReference type="STRING" id="9606.ENSP00000498596"/>
<dbReference type="BindingDB" id="Q86WV6"/>
<dbReference type="ChEMBL" id="CHEMBL4523377"/>
<dbReference type="DrugBank" id="DB14722">
    <property type="generic name" value="ADU-S100"/>
</dbReference>
<dbReference type="GuidetoPHARMACOLOGY" id="2902"/>
<dbReference type="TCDB" id="1.A.140.1.1">
    <property type="family name" value="the stimulator of interferon genes protein (sting) family"/>
</dbReference>
<dbReference type="GlyGen" id="Q86WV6">
    <property type="glycosylation" value="1 site, 1 O-linked glycan (1 site)"/>
</dbReference>
<dbReference type="iPTMnet" id="Q86WV6"/>
<dbReference type="PhosphoSitePlus" id="Q86WV6"/>
<dbReference type="SwissPalm" id="Q86WV6"/>
<dbReference type="BioMuta" id="TMEM173"/>
<dbReference type="DMDM" id="74727720"/>
<dbReference type="jPOST" id="Q86WV6"/>
<dbReference type="MassIVE" id="Q86WV6"/>
<dbReference type="PaxDb" id="9606-ENSP00000331288"/>
<dbReference type="PeptideAtlas" id="Q86WV6"/>
<dbReference type="ProteomicsDB" id="70211"/>
<dbReference type="Pumba" id="Q86WV6"/>
<dbReference type="Antibodypedia" id="26796">
    <property type="antibodies" value="867 antibodies from 43 providers"/>
</dbReference>
<dbReference type="CPTC" id="Q86WV6">
    <property type="antibodies" value="1 antibody"/>
</dbReference>
<dbReference type="DNASU" id="340061"/>
<dbReference type="YCharOS" id="Q86WV6">
    <property type="antibodies" value="Tested 16 antibodies from 9 manufacturers"/>
</dbReference>
<dbReference type="Ensembl" id="ENST00000330794.9">
    <property type="protein sequence ID" value="ENSP00000331288.4"/>
    <property type="gene ID" value="ENSG00000184584.14"/>
</dbReference>
<dbReference type="Ensembl" id="ENST00000651699.1">
    <property type="protein sequence ID" value="ENSP00000499166.1"/>
    <property type="gene ID" value="ENSG00000184584.14"/>
</dbReference>
<dbReference type="Ensembl" id="ENST00000652271.1">
    <property type="protein sequence ID" value="ENSP00000498596.1"/>
    <property type="gene ID" value="ENSG00000184584.14"/>
</dbReference>
<dbReference type="Ensembl" id="ENST00000672096.1">
    <property type="protein sequence ID" value="ENSP00000500685.1"/>
    <property type="gene ID" value="ENSG00000288243.1"/>
</dbReference>
<dbReference type="Ensembl" id="ENST00000672102.1">
    <property type="protein sequence ID" value="ENSP00000500793.1"/>
    <property type="gene ID" value="ENSG00000288243.1"/>
</dbReference>
<dbReference type="Ensembl" id="ENST00000672865.1">
    <property type="protein sequence ID" value="ENSP00000500823.1"/>
    <property type="gene ID" value="ENSG00000288243.1"/>
</dbReference>
<dbReference type="GeneID" id="340061"/>
<dbReference type="KEGG" id="hsa:340061"/>
<dbReference type="MANE-Select" id="ENST00000330794.9">
    <property type="protein sequence ID" value="ENSP00000331288.4"/>
    <property type="RefSeq nucleotide sequence ID" value="NM_198282.4"/>
    <property type="RefSeq protein sequence ID" value="NP_938023.1"/>
</dbReference>
<dbReference type="UCSC" id="uc003lep.4">
    <property type="organism name" value="human"/>
</dbReference>
<dbReference type="AGR" id="HGNC:27962"/>
<dbReference type="CTD" id="340061"/>
<dbReference type="DisGeNET" id="340061"/>
<dbReference type="GeneCards" id="STING1"/>
<dbReference type="HGNC" id="HGNC:27962">
    <property type="gene designation" value="STING1"/>
</dbReference>
<dbReference type="HPA" id="ENSG00000184584">
    <property type="expression patterns" value="Low tissue specificity"/>
</dbReference>
<dbReference type="MalaCards" id="STING1"/>
<dbReference type="MIM" id="612374">
    <property type="type" value="gene"/>
</dbReference>
<dbReference type="MIM" id="615934">
    <property type="type" value="phenotype"/>
</dbReference>
<dbReference type="neXtProt" id="NX_Q86WV6"/>
<dbReference type="OpenTargets" id="ENSG00000184584"/>
<dbReference type="Orphanet" id="481662">
    <property type="disease" value="Familial Chilblain lupus"/>
</dbReference>
<dbReference type="Orphanet" id="425120">
    <property type="disease" value="STING-associated vasculopathy with onset in infancy"/>
</dbReference>
<dbReference type="VEuPathDB" id="HostDB:ENSG00000184584"/>
<dbReference type="eggNOG" id="ENOG502R15M">
    <property type="taxonomic scope" value="Eukaryota"/>
</dbReference>
<dbReference type="GeneTree" id="ENSGT00390000008582"/>
<dbReference type="HOGENOM" id="CLU_062449_0_0_1"/>
<dbReference type="InParanoid" id="Q86WV6"/>
<dbReference type="OMA" id="QYGQAGF"/>
<dbReference type="OrthoDB" id="6053839at2759"/>
<dbReference type="PAN-GO" id="Q86WV6">
    <property type="GO annotations" value="11 GO annotations based on evolutionary models"/>
</dbReference>
<dbReference type="PhylomeDB" id="Q86WV6"/>
<dbReference type="TreeFam" id="TF324444"/>
<dbReference type="PathwayCommons" id="Q86WV6"/>
<dbReference type="Reactome" id="R-HSA-1834941">
    <property type="pathway name" value="STING mediated induction of host immune responses"/>
</dbReference>
<dbReference type="Reactome" id="R-HSA-3134975">
    <property type="pathway name" value="Regulation of innate immune responses to cytosolic DNA"/>
</dbReference>
<dbReference type="Reactome" id="R-HSA-3249367">
    <property type="pathway name" value="STAT6-mediated induction of chemokines"/>
</dbReference>
<dbReference type="Reactome" id="R-HSA-3270619">
    <property type="pathway name" value="IRF3-mediated induction of type I IFN"/>
</dbReference>
<dbReference type="Reactome" id="R-HSA-6798695">
    <property type="pathway name" value="Neutrophil degranulation"/>
</dbReference>
<dbReference type="Reactome" id="R-HSA-9692916">
    <property type="pathway name" value="SARS-CoV-1 activates/modulates innate immune responses"/>
</dbReference>
<dbReference type="Reactome" id="R-HSA-9705671">
    <property type="pathway name" value="SARS-CoV-2 activates/modulates innate and adaptive immune responses"/>
</dbReference>
<dbReference type="SignaLink" id="Q86WV6"/>
<dbReference type="SIGNOR" id="Q86WV6"/>
<dbReference type="BioGRID-ORCS" id="340061">
    <property type="hits" value="13 hits in 1159 CRISPR screens"/>
</dbReference>
<dbReference type="CD-CODE" id="7F558BCC">
    <property type="entry name" value="STING phase-separator"/>
</dbReference>
<dbReference type="ChiTaRS" id="TMEM173">
    <property type="organism name" value="human"/>
</dbReference>
<dbReference type="EvolutionaryTrace" id="Q86WV6"/>
<dbReference type="GenomeRNAi" id="340061"/>
<dbReference type="Pharos" id="Q86WV6">
    <property type="development level" value="Tchem"/>
</dbReference>
<dbReference type="PRO" id="PR:Q86WV6"/>
<dbReference type="Proteomes" id="UP000005640">
    <property type="component" value="Chromosome 5"/>
</dbReference>
<dbReference type="RNAct" id="Q86WV6">
    <property type="molecule type" value="protein"/>
</dbReference>
<dbReference type="Bgee" id="ENSG00000184584">
    <property type="expression patterns" value="Expressed in right uterine tube and 98 other cell types or tissues"/>
</dbReference>
<dbReference type="ExpressionAtlas" id="Q86WV6">
    <property type="expression patterns" value="baseline and differential"/>
</dbReference>
<dbReference type="GO" id="GO:0005776">
    <property type="term" value="C:autophagosome"/>
    <property type="evidence" value="ECO:0000314"/>
    <property type="project" value="UniProtKB"/>
</dbReference>
<dbReference type="GO" id="GO:0000421">
    <property type="term" value="C:autophagosome membrane"/>
    <property type="evidence" value="ECO:0007669"/>
    <property type="project" value="UniProtKB-SubCell"/>
</dbReference>
<dbReference type="GO" id="GO:0036064">
    <property type="term" value="C:ciliary basal body"/>
    <property type="evidence" value="ECO:0000314"/>
    <property type="project" value="HPA"/>
</dbReference>
<dbReference type="GO" id="GO:0005929">
    <property type="term" value="C:cilium"/>
    <property type="evidence" value="ECO:0000314"/>
    <property type="project" value="HPA"/>
</dbReference>
<dbReference type="GO" id="GO:0030659">
    <property type="term" value="C:cytoplasmic vesicle membrane"/>
    <property type="evidence" value="ECO:0000304"/>
    <property type="project" value="Reactome"/>
</dbReference>
<dbReference type="GO" id="GO:0005829">
    <property type="term" value="C:cytosol"/>
    <property type="evidence" value="ECO:0000314"/>
    <property type="project" value="HPA"/>
</dbReference>
<dbReference type="GO" id="GO:0005789">
    <property type="term" value="C:endoplasmic reticulum membrane"/>
    <property type="evidence" value="ECO:0000314"/>
    <property type="project" value="UniProtKB"/>
</dbReference>
<dbReference type="GO" id="GO:0033116">
    <property type="term" value="C:endoplasmic reticulum-Golgi intermediate compartment membrane"/>
    <property type="evidence" value="ECO:0000314"/>
    <property type="project" value="UniProtKB"/>
</dbReference>
<dbReference type="GO" id="GO:0005768">
    <property type="term" value="C:endosome"/>
    <property type="evidence" value="ECO:0000314"/>
    <property type="project" value="UniProtKB"/>
</dbReference>
<dbReference type="GO" id="GO:0000139">
    <property type="term" value="C:Golgi membrane"/>
    <property type="evidence" value="ECO:0000314"/>
    <property type="project" value="UniProtKB"/>
</dbReference>
<dbReference type="GO" id="GO:0005741">
    <property type="term" value="C:mitochondrial outer membrane"/>
    <property type="evidence" value="ECO:0000314"/>
    <property type="project" value="BHF-UCL"/>
</dbReference>
<dbReference type="GO" id="GO:0005654">
    <property type="term" value="C:nucleoplasm"/>
    <property type="evidence" value="ECO:0000314"/>
    <property type="project" value="HPA"/>
</dbReference>
<dbReference type="GO" id="GO:0048471">
    <property type="term" value="C:perinuclear region of cytoplasm"/>
    <property type="evidence" value="ECO:0000250"/>
    <property type="project" value="UniProtKB"/>
</dbReference>
<dbReference type="GO" id="GO:0005777">
    <property type="term" value="C:peroxisome"/>
    <property type="evidence" value="ECO:0007669"/>
    <property type="project" value="Ensembl"/>
</dbReference>
<dbReference type="GO" id="GO:0005886">
    <property type="term" value="C:plasma membrane"/>
    <property type="evidence" value="ECO:0000304"/>
    <property type="project" value="Reactome"/>
</dbReference>
<dbReference type="GO" id="GO:0030667">
    <property type="term" value="C:secretory granule membrane"/>
    <property type="evidence" value="ECO:0000304"/>
    <property type="project" value="Reactome"/>
</dbReference>
<dbReference type="GO" id="GO:1902554">
    <property type="term" value="C:serine/threonine protein kinase complex"/>
    <property type="evidence" value="ECO:0000303"/>
    <property type="project" value="ComplexPortal"/>
</dbReference>
<dbReference type="GO" id="GO:1990231">
    <property type="term" value="C:STING complex"/>
    <property type="evidence" value="ECO:0000353"/>
    <property type="project" value="ComplexPortal"/>
</dbReference>
<dbReference type="GO" id="GO:0061507">
    <property type="term" value="F:2',3'-cyclic GMP-AMP binding"/>
    <property type="evidence" value="ECO:0000314"/>
    <property type="project" value="UniProtKB"/>
</dbReference>
<dbReference type="GO" id="GO:0035438">
    <property type="term" value="F:cyclic-di-GMP binding"/>
    <property type="evidence" value="ECO:0000314"/>
    <property type="project" value="UniProtKB"/>
</dbReference>
<dbReference type="GO" id="GO:0140297">
    <property type="term" value="F:DNA-binding transcription factor binding"/>
    <property type="evidence" value="ECO:0000353"/>
    <property type="project" value="BHF-UCL"/>
</dbReference>
<dbReference type="GO" id="GO:0042802">
    <property type="term" value="F:identical protein binding"/>
    <property type="evidence" value="ECO:0000353"/>
    <property type="project" value="IntAct"/>
</dbReference>
<dbReference type="GO" id="GO:0042803">
    <property type="term" value="F:protein homodimerization activity"/>
    <property type="evidence" value="ECO:0000314"/>
    <property type="project" value="UniProtKB"/>
</dbReference>
<dbReference type="GO" id="GO:0019901">
    <property type="term" value="F:protein kinase binding"/>
    <property type="evidence" value="ECO:0000314"/>
    <property type="project" value="BHF-UCL"/>
</dbReference>
<dbReference type="GO" id="GO:0120283">
    <property type="term" value="F:protein serine/threonine kinase binding"/>
    <property type="evidence" value="ECO:0000353"/>
    <property type="project" value="BHF-UCL"/>
</dbReference>
<dbReference type="GO" id="GO:0015252">
    <property type="term" value="F:proton channel activity"/>
    <property type="evidence" value="ECO:0000314"/>
    <property type="project" value="UniProtKB"/>
</dbReference>
<dbReference type="GO" id="GO:0061629">
    <property type="term" value="F:RNA polymerase II-specific DNA-binding transcription factor binding"/>
    <property type="evidence" value="ECO:0000314"/>
    <property type="project" value="BHF-UCL"/>
</dbReference>
<dbReference type="GO" id="GO:0035591">
    <property type="term" value="F:signaling adaptor activity"/>
    <property type="evidence" value="ECO:0000314"/>
    <property type="project" value="UniProtKB"/>
</dbReference>
<dbReference type="GO" id="GO:0031625">
    <property type="term" value="F:ubiquitin protein ligase binding"/>
    <property type="evidence" value="ECO:0007669"/>
    <property type="project" value="Ensembl"/>
</dbReference>
<dbReference type="GO" id="GO:0002218">
    <property type="term" value="P:activation of innate immune response"/>
    <property type="evidence" value="ECO:0000314"/>
    <property type="project" value="ComplexPortal"/>
</dbReference>
<dbReference type="GO" id="GO:0140374">
    <property type="term" value="P:antiviral innate immune response"/>
    <property type="evidence" value="ECO:0000314"/>
    <property type="project" value="UniProt"/>
</dbReference>
<dbReference type="GO" id="GO:0000045">
    <property type="term" value="P:autophagosome assembly"/>
    <property type="evidence" value="ECO:0000314"/>
    <property type="project" value="UniProtKB"/>
</dbReference>
<dbReference type="GO" id="GO:0071360">
    <property type="term" value="P:cellular response to exogenous dsRNA"/>
    <property type="evidence" value="ECO:0000315"/>
    <property type="project" value="BHF-UCL"/>
</dbReference>
<dbReference type="GO" id="GO:0035458">
    <property type="term" value="P:cellular response to interferon-beta"/>
    <property type="evidence" value="ECO:0007669"/>
    <property type="project" value="Ensembl"/>
</dbReference>
<dbReference type="GO" id="GO:0140896">
    <property type="term" value="P:cGAS/STING signaling pathway"/>
    <property type="evidence" value="ECO:0000314"/>
    <property type="project" value="UniProtKB"/>
</dbReference>
<dbReference type="GO" id="GO:0002753">
    <property type="term" value="P:cytoplasmic pattern recognition receptor signaling pathway"/>
    <property type="evidence" value="ECO:0000314"/>
    <property type="project" value="UniProtKB"/>
</dbReference>
<dbReference type="GO" id="GO:0051607">
    <property type="term" value="P:defense response to virus"/>
    <property type="evidence" value="ECO:0000314"/>
    <property type="project" value="UniProtKB"/>
</dbReference>
<dbReference type="GO" id="GO:0045087">
    <property type="term" value="P:innate immune response"/>
    <property type="evidence" value="ECO:0000314"/>
    <property type="project" value="UniProtKB"/>
</dbReference>
<dbReference type="GO" id="GO:0002221">
    <property type="term" value="P:pattern recognition receptor signaling pathway"/>
    <property type="evidence" value="ECO:0000314"/>
    <property type="project" value="UniProt"/>
</dbReference>
<dbReference type="GO" id="GO:0002230">
    <property type="term" value="P:positive regulation of defense response to virus by host"/>
    <property type="evidence" value="ECO:0000315"/>
    <property type="project" value="BHF-UCL"/>
</dbReference>
<dbReference type="GO" id="GO:0051091">
    <property type="term" value="P:positive regulation of DNA-binding transcription factor activity"/>
    <property type="evidence" value="ECO:0000314"/>
    <property type="project" value="BHF-UCL"/>
</dbReference>
<dbReference type="GO" id="GO:0032728">
    <property type="term" value="P:positive regulation of interferon-beta production"/>
    <property type="evidence" value="ECO:0000314"/>
    <property type="project" value="UniProtKB"/>
</dbReference>
<dbReference type="GO" id="GO:0016239">
    <property type="term" value="P:positive regulation of macroautophagy"/>
    <property type="evidence" value="ECO:0000314"/>
    <property type="project" value="UniProtKB"/>
</dbReference>
<dbReference type="GO" id="GO:0045944">
    <property type="term" value="P:positive regulation of transcription by RNA polymerase II"/>
    <property type="evidence" value="ECO:0000314"/>
    <property type="project" value="BHF-UCL"/>
</dbReference>
<dbReference type="GO" id="GO:0032481">
    <property type="term" value="P:positive regulation of type I interferon production"/>
    <property type="evidence" value="ECO:0000314"/>
    <property type="project" value="UniProtKB"/>
</dbReference>
<dbReference type="GO" id="GO:0060340">
    <property type="term" value="P:positive regulation of type I interferon-mediated signaling pathway"/>
    <property type="evidence" value="ECO:0000314"/>
    <property type="project" value="ComplexPortal"/>
</dbReference>
<dbReference type="GO" id="GO:0051259">
    <property type="term" value="P:protein complex oligomerization"/>
    <property type="evidence" value="ECO:0000314"/>
    <property type="project" value="UniProtKB"/>
</dbReference>
<dbReference type="GO" id="GO:0070972">
    <property type="term" value="P:protein localization to endoplasmic reticulum"/>
    <property type="evidence" value="ECO:0000314"/>
    <property type="project" value="UniProt"/>
</dbReference>
<dbReference type="GO" id="GO:0050727">
    <property type="term" value="P:regulation of inflammatory response"/>
    <property type="evidence" value="ECO:0007669"/>
    <property type="project" value="Ensembl"/>
</dbReference>
<dbReference type="GO" id="GO:0061709">
    <property type="term" value="P:reticulophagy"/>
    <property type="evidence" value="ECO:0000250"/>
    <property type="project" value="UniProtKB"/>
</dbReference>
<dbReference type="CDD" id="cd22658">
    <property type="entry name" value="STING_C_metazoan-like"/>
    <property type="match status" value="1"/>
</dbReference>
<dbReference type="DisProt" id="DP01602"/>
<dbReference type="FunFam" id="1.20.5.5200:FF:000001">
    <property type="entry name" value="Stimulator of interferon genes protein"/>
    <property type="match status" value="1"/>
</dbReference>
<dbReference type="FunFam" id="3.40.50.12100:FF:000001">
    <property type="entry name" value="Stimulator of interferon genes protein"/>
    <property type="match status" value="1"/>
</dbReference>
<dbReference type="Gene3D" id="1.20.5.5200">
    <property type="match status" value="1"/>
</dbReference>
<dbReference type="Gene3D" id="3.40.50.12100">
    <property type="entry name" value="Stimulator of interferon genes protein"/>
    <property type="match status" value="1"/>
</dbReference>
<dbReference type="InterPro" id="IPR029158">
    <property type="entry name" value="STING"/>
</dbReference>
<dbReference type="InterPro" id="IPR047191">
    <property type="entry name" value="STING_C_chordates"/>
</dbReference>
<dbReference type="InterPro" id="IPR038623">
    <property type="entry name" value="STING_C_sf"/>
</dbReference>
<dbReference type="InterPro" id="IPR055432">
    <property type="entry name" value="STING_LBD"/>
</dbReference>
<dbReference type="InterPro" id="IPR055434">
    <property type="entry name" value="STING_TM"/>
</dbReference>
<dbReference type="PANTHER" id="PTHR34339">
    <property type="entry name" value="STIMULATOR OF INTERFERON GENES PROTEIN"/>
    <property type="match status" value="1"/>
</dbReference>
<dbReference type="PANTHER" id="PTHR34339:SF1">
    <property type="entry name" value="STIMULATOR OF INTERFERON GENES PROTEIN"/>
    <property type="match status" value="1"/>
</dbReference>
<dbReference type="Pfam" id="PF15009">
    <property type="entry name" value="STING_LBD"/>
    <property type="match status" value="1"/>
</dbReference>
<dbReference type="Pfam" id="PF23417">
    <property type="entry name" value="STING_TM"/>
    <property type="match status" value="1"/>
</dbReference>
<accession>Q86WV6</accession>
<accession>A8K3P6</accession>
<accession>B6EB35</accession>
<accession>D6RBX0</accession>
<accession>D6RE01</accession>
<accession>D6RID9</accession>
<name>STING_HUMAN</name>
<keyword id="KW-0002">3D-structure</keyword>
<keyword id="KW-0072">Autophagy</keyword>
<keyword id="KW-1003">Cell membrane</keyword>
<keyword id="KW-0963">Cytoplasm</keyword>
<keyword id="KW-0968">Cytoplasmic vesicle</keyword>
<keyword id="KW-0225">Disease variant</keyword>
<keyword id="KW-0256">Endoplasmic reticulum</keyword>
<keyword id="KW-0333">Golgi apparatus</keyword>
<keyword id="KW-0945">Host-virus interaction</keyword>
<keyword id="KW-0391">Immunity</keyword>
<keyword id="KW-0399">Innate immunity</keyword>
<keyword id="KW-0407">Ion channel</keyword>
<keyword id="KW-0406">Ion transport</keyword>
<keyword id="KW-1017">Isopeptide bond</keyword>
<keyword id="KW-0449">Lipoprotein</keyword>
<keyword id="KW-0472">Membrane</keyword>
<keyword id="KW-0496">Mitochondrion</keyword>
<keyword id="KW-1000">Mitochondrion outer membrane</keyword>
<keyword id="KW-0547">Nucleotide-binding</keyword>
<keyword id="KW-0564">Palmitate</keyword>
<keyword id="KW-0597">Phosphoprotein</keyword>
<keyword id="KW-1267">Proteomics identification</keyword>
<keyword id="KW-1185">Reference proteome</keyword>
<keyword id="KW-0812">Transmembrane</keyword>
<keyword id="KW-1133">Transmembrane helix</keyword>
<keyword id="KW-0813">Transport</keyword>
<keyword id="KW-0832">Ubl conjugation</keyword>
<organism>
    <name type="scientific">Homo sapiens</name>
    <name type="common">Human</name>
    <dbReference type="NCBI Taxonomy" id="9606"/>
    <lineage>
        <taxon>Eukaryota</taxon>
        <taxon>Metazoa</taxon>
        <taxon>Chordata</taxon>
        <taxon>Craniata</taxon>
        <taxon>Vertebrata</taxon>
        <taxon>Euteleostomi</taxon>
        <taxon>Mammalia</taxon>
        <taxon>Eutheria</taxon>
        <taxon>Euarchontoglires</taxon>
        <taxon>Primates</taxon>
        <taxon>Haplorrhini</taxon>
        <taxon>Catarrhini</taxon>
        <taxon>Hominidae</taxon>
        <taxon>Homo</taxon>
    </lineage>
</organism>
<reference key="1">
    <citation type="journal article" date="2008" name="Immunity">
        <title>The adaptor protein MITA links virus-sensing receptors to IRF3 transcription factor activation.</title>
        <authorList>
            <person name="Zhong B."/>
            <person name="Yang Y."/>
            <person name="Li S."/>
            <person name="Wang Y.-Y."/>
            <person name="Li Y."/>
            <person name="Diao F."/>
            <person name="Lei C."/>
            <person name="He X."/>
            <person name="Zhang L."/>
            <person name="Tien P."/>
            <person name="Shu H.-B."/>
        </authorList>
    </citation>
    <scope>NUCLEOTIDE SEQUENCE [MRNA]</scope>
    <scope>FUNCTION</scope>
    <scope>SUBCELLULAR LOCATION</scope>
    <scope>TISSUE SPECIFICITY</scope>
    <scope>INTERACTION WITH MAVS</scope>
    <scope>PHOSPHORYLATION AT SER-358</scope>
    <scope>MUTAGENESIS OF 324-SER--SER-326 AND SER-358</scope>
</reference>
<reference key="2">
    <citation type="journal article" date="2004" name="Nat. Genet.">
        <title>Complete sequencing and characterization of 21,243 full-length human cDNAs.</title>
        <authorList>
            <person name="Ota T."/>
            <person name="Suzuki Y."/>
            <person name="Nishikawa T."/>
            <person name="Otsuki T."/>
            <person name="Sugiyama T."/>
            <person name="Irie R."/>
            <person name="Wakamatsu A."/>
            <person name="Hayashi K."/>
            <person name="Sato H."/>
            <person name="Nagai K."/>
            <person name="Kimura K."/>
            <person name="Makita H."/>
            <person name="Sekine M."/>
            <person name="Obayashi M."/>
            <person name="Nishi T."/>
            <person name="Shibahara T."/>
            <person name="Tanaka T."/>
            <person name="Ishii S."/>
            <person name="Yamamoto J."/>
            <person name="Saito K."/>
            <person name="Kawai Y."/>
            <person name="Isono Y."/>
            <person name="Nakamura Y."/>
            <person name="Nagahari K."/>
            <person name="Murakami K."/>
            <person name="Yasuda T."/>
            <person name="Iwayanagi T."/>
            <person name="Wagatsuma M."/>
            <person name="Shiratori A."/>
            <person name="Sudo H."/>
            <person name="Hosoiri T."/>
            <person name="Kaku Y."/>
            <person name="Kodaira H."/>
            <person name="Kondo H."/>
            <person name="Sugawara M."/>
            <person name="Takahashi M."/>
            <person name="Kanda K."/>
            <person name="Yokoi T."/>
            <person name="Furuya T."/>
            <person name="Kikkawa E."/>
            <person name="Omura Y."/>
            <person name="Abe K."/>
            <person name="Kamihara K."/>
            <person name="Katsuta N."/>
            <person name="Sato K."/>
            <person name="Tanikawa M."/>
            <person name="Yamazaki M."/>
            <person name="Ninomiya K."/>
            <person name="Ishibashi T."/>
            <person name="Yamashita H."/>
            <person name="Murakawa K."/>
            <person name="Fujimori K."/>
            <person name="Tanai H."/>
            <person name="Kimata M."/>
            <person name="Watanabe M."/>
            <person name="Hiraoka S."/>
            <person name="Chiba Y."/>
            <person name="Ishida S."/>
            <person name="Ono Y."/>
            <person name="Takiguchi S."/>
            <person name="Watanabe S."/>
            <person name="Yosida M."/>
            <person name="Hotuta T."/>
            <person name="Kusano J."/>
            <person name="Kanehori K."/>
            <person name="Takahashi-Fujii A."/>
            <person name="Hara H."/>
            <person name="Tanase T.-O."/>
            <person name="Nomura Y."/>
            <person name="Togiya S."/>
            <person name="Komai F."/>
            <person name="Hara R."/>
            <person name="Takeuchi K."/>
            <person name="Arita M."/>
            <person name="Imose N."/>
            <person name="Musashino K."/>
            <person name="Yuuki H."/>
            <person name="Oshima A."/>
            <person name="Sasaki N."/>
            <person name="Aotsuka S."/>
            <person name="Yoshikawa Y."/>
            <person name="Matsunawa H."/>
            <person name="Ichihara T."/>
            <person name="Shiohata N."/>
            <person name="Sano S."/>
            <person name="Moriya S."/>
            <person name="Momiyama H."/>
            <person name="Satoh N."/>
            <person name="Takami S."/>
            <person name="Terashima Y."/>
            <person name="Suzuki O."/>
            <person name="Nakagawa S."/>
            <person name="Senoh A."/>
            <person name="Mizoguchi H."/>
            <person name="Goto Y."/>
            <person name="Shimizu F."/>
            <person name="Wakebe H."/>
            <person name="Hishigaki H."/>
            <person name="Watanabe T."/>
            <person name="Sugiyama A."/>
            <person name="Takemoto M."/>
            <person name="Kawakami B."/>
            <person name="Yamazaki M."/>
            <person name="Watanabe K."/>
            <person name="Kumagai A."/>
            <person name="Itakura S."/>
            <person name="Fukuzumi Y."/>
            <person name="Fujimori Y."/>
            <person name="Komiyama M."/>
            <person name="Tashiro H."/>
            <person name="Tanigami A."/>
            <person name="Fujiwara T."/>
            <person name="Ono T."/>
            <person name="Yamada K."/>
            <person name="Fujii Y."/>
            <person name="Ozaki K."/>
            <person name="Hirao M."/>
            <person name="Ohmori Y."/>
            <person name="Kawabata A."/>
            <person name="Hikiji T."/>
            <person name="Kobatake N."/>
            <person name="Inagaki H."/>
            <person name="Ikema Y."/>
            <person name="Okamoto S."/>
            <person name="Okitani R."/>
            <person name="Kawakami T."/>
            <person name="Noguchi S."/>
            <person name="Itoh T."/>
            <person name="Shigeta K."/>
            <person name="Senba T."/>
            <person name="Matsumura K."/>
            <person name="Nakajima Y."/>
            <person name="Mizuno T."/>
            <person name="Morinaga M."/>
            <person name="Sasaki M."/>
            <person name="Togashi T."/>
            <person name="Oyama M."/>
            <person name="Hata H."/>
            <person name="Watanabe M."/>
            <person name="Komatsu T."/>
            <person name="Mizushima-Sugano J."/>
            <person name="Satoh T."/>
            <person name="Shirai Y."/>
            <person name="Takahashi Y."/>
            <person name="Nakagawa K."/>
            <person name="Okumura K."/>
            <person name="Nagase T."/>
            <person name="Nomura N."/>
            <person name="Kikuchi H."/>
            <person name="Masuho Y."/>
            <person name="Yamashita R."/>
            <person name="Nakai K."/>
            <person name="Yada T."/>
            <person name="Nakamura Y."/>
            <person name="Ohara O."/>
            <person name="Isogai T."/>
            <person name="Sugano S."/>
        </authorList>
    </citation>
    <scope>NUCLEOTIDE SEQUENCE [LARGE SCALE MRNA]</scope>
    <scope>VARIANT ARG-232</scope>
</reference>
<reference key="3">
    <citation type="journal article" date="2004" name="Nature">
        <title>The DNA sequence and comparative analysis of human chromosome 5.</title>
        <authorList>
            <person name="Schmutz J."/>
            <person name="Martin J."/>
            <person name="Terry A."/>
            <person name="Couronne O."/>
            <person name="Grimwood J."/>
            <person name="Lowry S."/>
            <person name="Gordon L.A."/>
            <person name="Scott D."/>
            <person name="Xie G."/>
            <person name="Huang W."/>
            <person name="Hellsten U."/>
            <person name="Tran-Gyamfi M."/>
            <person name="She X."/>
            <person name="Prabhakar S."/>
            <person name="Aerts A."/>
            <person name="Altherr M."/>
            <person name="Bajorek E."/>
            <person name="Black S."/>
            <person name="Branscomb E."/>
            <person name="Caoile C."/>
            <person name="Challacombe J.F."/>
            <person name="Chan Y.M."/>
            <person name="Denys M."/>
            <person name="Detter J.C."/>
            <person name="Escobar J."/>
            <person name="Flowers D."/>
            <person name="Fotopulos D."/>
            <person name="Glavina T."/>
            <person name="Gomez M."/>
            <person name="Gonzales E."/>
            <person name="Goodstein D."/>
            <person name="Grigoriev I."/>
            <person name="Groza M."/>
            <person name="Hammon N."/>
            <person name="Hawkins T."/>
            <person name="Haydu L."/>
            <person name="Israni S."/>
            <person name="Jett J."/>
            <person name="Kadner K."/>
            <person name="Kimball H."/>
            <person name="Kobayashi A."/>
            <person name="Lopez F."/>
            <person name="Lou Y."/>
            <person name="Martinez D."/>
            <person name="Medina C."/>
            <person name="Morgan J."/>
            <person name="Nandkeshwar R."/>
            <person name="Noonan J.P."/>
            <person name="Pitluck S."/>
            <person name="Pollard M."/>
            <person name="Predki P."/>
            <person name="Priest J."/>
            <person name="Ramirez L."/>
            <person name="Retterer J."/>
            <person name="Rodriguez A."/>
            <person name="Rogers S."/>
            <person name="Salamov A."/>
            <person name="Salazar A."/>
            <person name="Thayer N."/>
            <person name="Tice H."/>
            <person name="Tsai M."/>
            <person name="Ustaszewska A."/>
            <person name="Vo N."/>
            <person name="Wheeler J."/>
            <person name="Wu K."/>
            <person name="Yang J."/>
            <person name="Dickson M."/>
            <person name="Cheng J.-F."/>
            <person name="Eichler E.E."/>
            <person name="Olsen A."/>
            <person name="Pennacchio L.A."/>
            <person name="Rokhsar D.S."/>
            <person name="Richardson P."/>
            <person name="Lucas S.M."/>
            <person name="Myers R.M."/>
            <person name="Rubin E.M."/>
        </authorList>
    </citation>
    <scope>NUCLEOTIDE SEQUENCE [LARGE SCALE GENOMIC DNA]</scope>
</reference>
<reference key="4">
    <citation type="journal article" date="2004" name="Genome Res.">
        <title>The status, quality, and expansion of the NIH full-length cDNA project: the Mammalian Gene Collection (MGC).</title>
        <authorList>
            <consortium name="The MGC Project Team"/>
        </authorList>
    </citation>
    <scope>NUCLEOTIDE SEQUENCE [LARGE SCALE MRNA]</scope>
    <source>
        <tissue>Lung</tissue>
    </source>
</reference>
<reference key="5">
    <citation type="journal article" date="2008" name="Nature">
        <title>STING is an endoplasmic reticulum adaptor that facilitates innate immune signalling.</title>
        <authorList>
            <person name="Ishikawa H."/>
            <person name="Barber G.N."/>
        </authorList>
    </citation>
    <scope>FUNCTION</scope>
    <scope>SUBCELLULAR LOCATION</scope>
    <scope>TISSUE SPECIFICITY</scope>
    <scope>INTERACTION WITH RIGI AND SSR2</scope>
</reference>
<reference key="6">
    <citation type="journal article" date="2009" name="Immunity">
        <title>The ubiquitin ligase RNF5 regulates antiviral responses by mediating degradation of the adaptor protein MITA.</title>
        <authorList>
            <person name="Zhong B."/>
            <person name="Zhang L."/>
            <person name="Lei C."/>
            <person name="Li Y."/>
            <person name="Mao A.P."/>
            <person name="Yang Y."/>
            <person name="Wang Y.Y."/>
            <person name="Zhang X.L."/>
            <person name="Shu H.B."/>
        </authorList>
    </citation>
    <scope>UBIQUITINATION AT LYS-150</scope>
    <scope>INTERACTION WITH RNF5</scope>
    <scope>SUBCELLULAR LOCATION</scope>
    <scope>MUTAGENESIS OF LYS-150</scope>
</reference>
<reference key="7">
    <citation type="journal article" date="2009" name="Nature">
        <title>STING regulates intracellular DNA-mediated, type I interferon-dependent innate immunity.</title>
        <authorList>
            <person name="Ishikawa H."/>
            <person name="Ma Z."/>
            <person name="Barber G.N."/>
        </authorList>
    </citation>
    <scope>FUNCTION</scope>
    <scope>SUBCELLULAR LOCATION</scope>
</reference>
<reference key="8">
    <citation type="journal article" date="2009" name="Proc. Natl. Acad. Sci. U.S.A.">
        <title>ISG56 is a negative-feedback regulator of virus-triggered signaling and cellular antiviral response.</title>
        <authorList>
            <person name="Li Y."/>
            <person name="Li C."/>
            <person name="Xue P."/>
            <person name="Zhong B."/>
            <person name="Mao A.P."/>
            <person name="Ran Y."/>
            <person name="Chen H."/>
            <person name="Wang Y.Y."/>
            <person name="Yang F."/>
            <person name="Shu H.B."/>
        </authorList>
    </citation>
    <scope>INTERACTION WITH IFIT1; IFIT2; MAVS AND TBK1</scope>
</reference>
<reference key="9">
    <citation type="journal article" date="2009" name="Proc. Natl. Acad. Sci. U.S.A.">
        <title>ERIS, an endoplasmic reticulum IFN stimulator, activates innate immune signaling through dimerization.</title>
        <authorList>
            <person name="Sun W."/>
            <person name="Li Y."/>
            <person name="Chen L."/>
            <person name="Chen H."/>
            <person name="You F."/>
            <person name="Zhou X."/>
            <person name="Zhou Y."/>
            <person name="Zhai Z."/>
            <person name="Chen D."/>
            <person name="Jiang Z."/>
        </authorList>
    </citation>
    <scope>FUNCTION</scope>
    <scope>SUBCELLULAR LOCATION</scope>
    <scope>HOMODIMERIZATION</scope>
    <scope>PHOSPHORYLATION</scope>
    <scope>UBIQUITINATION</scope>
    <scope>MUTAGENESIS OF 76-ARG--ARG-78 AND 178-ARG--ARG-180</scope>
</reference>
<reference key="10">
    <citation type="journal article" date="2010" name="Cell Res.">
        <title>Tom70 mediates activation of interferon regulatory factor 3 on mitochondria.</title>
        <authorList>
            <person name="Liu X.Y."/>
            <person name="Wei B."/>
            <person name="Shi H.X."/>
            <person name="Shan Y.F."/>
            <person name="Wang C."/>
        </authorList>
    </citation>
    <scope>INTERACTION WITH TOMM70</scope>
</reference>
<reference key="11">
    <citation type="journal article" date="2010" name="Immunity">
        <title>The ubiquitin ligase TRIM56 regulates innate immune responses to intracellular double-stranded DNA.</title>
        <authorList>
            <person name="Tsuchida T."/>
            <person name="Zou J."/>
            <person name="Saitoh T."/>
            <person name="Kumar H."/>
            <person name="Abe T."/>
            <person name="Matsuura Y."/>
            <person name="Kawai T."/>
            <person name="Akira S."/>
        </authorList>
    </citation>
    <scope>FUNCTION</scope>
    <scope>HOMODIMERIZATION</scope>
    <scope>UBIQUITINATION AT LYS-150</scope>
    <scope>MUTAGENESIS OF LYS-20; LYS-137 AND LYS-150</scope>
</reference>
<reference key="12">
    <citation type="journal article" date="2011" name="Nature">
        <title>STING is a direct innate immune sensor of cyclic di-GMP.</title>
        <authorList>
            <person name="Burdette D.L."/>
            <person name="Monroe K.M."/>
            <person name="Sotelo-Troha K."/>
            <person name="Iwig J.S."/>
            <person name="Eckert B."/>
            <person name="Hyodo M."/>
            <person name="Hayakawa Y."/>
            <person name="Vance R.E."/>
        </authorList>
    </citation>
    <scope>FUNCTION</scope>
    <scope>C-DI-GMP-BINDING</scope>
</reference>
<reference key="13">
    <citation type="journal article" date="2012" name="Proc. Natl. Acad. Sci. U.S.A.">
        <title>Nuclear IFI16 induction of IRF-3 signaling during herpesviral infection and degradation of IFI16 by the viral ICP0 protein.</title>
        <authorList>
            <person name="Orzalli M.H."/>
            <person name="DeLuca N.A."/>
            <person name="Knipe D.M."/>
        </authorList>
    </citation>
    <scope>FUNCTION</scope>
</reference>
<reference key="14">
    <citation type="journal article" date="2012" name="Sci. Signal.">
        <title>STING specifies IRF3 phosphorylation by TBK1 in the cytosolic DNA signaling pathway.</title>
        <authorList>
            <person name="Tanaka Y."/>
            <person name="Chen Z.J."/>
        </authorList>
    </citation>
    <scope>FUNCTION</scope>
    <scope>INTERACTION WITH IRF3</scope>
    <scope>MUTAGENESIS OF VAL-341; THR-342; SER-358; GLU-360; SER-366; GLY-367; LEU-374; ARG-375 AND ASP-377</scope>
</reference>
<reference key="15">
    <citation type="journal article" date="2013" name="Cell Rep.">
        <title>The innate immune DNA sensor cGAS produces a noncanonical cyclic dinucleotide that activates human STING.</title>
        <authorList>
            <person name="Diner E.J."/>
            <person name="Burdette D.L."/>
            <person name="Wilson S.C."/>
            <person name="Monroe K.M."/>
            <person name="Kellenberger C.A."/>
            <person name="Hyodo M."/>
            <person name="Hayakawa Y."/>
            <person name="Hammond M.C."/>
            <person name="Vance R.E."/>
        </authorList>
    </citation>
    <scope>FUNCTION</scope>
</reference>
<reference key="16">
    <citation type="journal article" date="2013" name="Nature">
        <title>cGAS produces a 2'-5'-linked cyclic dinucleotide second messenger that activates STING.</title>
        <authorList>
            <person name="Ablasser A."/>
            <person name="Goldeck M."/>
            <person name="Cavlar T."/>
            <person name="Deimling T."/>
            <person name="Witte G."/>
            <person name="Rohl I."/>
            <person name="Hopfner K.P."/>
            <person name="Ludwig J."/>
            <person name="Hornung V."/>
        </authorList>
    </citation>
    <scope>FUNCTION</scope>
</reference>
<reference key="17">
    <citation type="journal article" date="2013" name="Science">
        <title>Cyclic GMP-AMP is an endogenous second messenger in innate immune signaling by cytosolic DNA.</title>
        <authorList>
            <person name="Wu J."/>
            <person name="Sun L."/>
            <person name="Chen X."/>
            <person name="Du F."/>
            <person name="Shi H."/>
            <person name="Chen C."/>
            <person name="Chen Z.J."/>
        </authorList>
    </citation>
    <scope>FUNCTION</scope>
</reference>
<reference key="18">
    <citation type="journal article" date="2014" name="Cell Host Microbe">
        <title>The ER-associated protein ZDHHC1 is a positive regulator of DNA virus-triggered, MITA/STING-dependent innate immune signaling.</title>
        <authorList>
            <person name="Zhou Q."/>
            <person name="Lin H."/>
            <person name="Wang S."/>
            <person name="Wang S."/>
            <person name="Ran Y."/>
            <person name="Liu Y."/>
            <person name="Ye W."/>
            <person name="Xiong X."/>
            <person name="Zhong B."/>
            <person name="Shu H.B."/>
            <person name="Wang Y.Y."/>
        </authorList>
    </citation>
    <scope>INTERACTION WITH ZDHHC1</scope>
    <scope>REGION</scope>
</reference>
<reference key="19">
    <citation type="journal article" date="2014" name="J. Proteomics">
        <title>An enzyme assisted RP-RPLC approach for in-depth analysis of human liver phosphoproteome.</title>
        <authorList>
            <person name="Bian Y."/>
            <person name="Song C."/>
            <person name="Cheng K."/>
            <person name="Dong M."/>
            <person name="Wang F."/>
            <person name="Huang J."/>
            <person name="Sun D."/>
            <person name="Wang L."/>
            <person name="Ye M."/>
            <person name="Zou H."/>
        </authorList>
    </citation>
    <scope>IDENTIFICATION BY MASS SPECTROMETRY [LARGE SCALE ANALYSIS]</scope>
    <source>
        <tissue>Liver</tissue>
    </source>
</reference>
<reference key="20">
    <citation type="journal article" date="2014" name="Nat. Chem. Biol.">
        <title>Hydrolysis of 2'3'-cGAMP by ENPP1 and design of nonhydrolyzable analogs.</title>
        <authorList>
            <person name="Li L."/>
            <person name="Yin Q."/>
            <person name="Kuss P."/>
            <person name="Maliga Z."/>
            <person name="Millan J.L."/>
            <person name="Wu H."/>
            <person name="Mitchison T.J."/>
        </authorList>
    </citation>
    <scope>ACTIVITY REGULATION</scope>
</reference>
<reference key="21">
    <citation type="journal article" date="2014" name="PLoS Pathog.">
        <title>RNF26 temporally regulates virus-triggered type I interferon induction by two distinct mechanisms.</title>
        <authorList>
            <person name="Qin Y."/>
            <person name="Zhou M.T."/>
            <person name="Hu M.M."/>
            <person name="Hu Y.H."/>
            <person name="Zhang J."/>
            <person name="Guo L."/>
            <person name="Zhong B."/>
            <person name="Shu H.B."/>
        </authorList>
    </citation>
    <scope>UBIQUITINATION AT LYS-150</scope>
    <scope>SUBCELLULAR LOCATION</scope>
    <scope>MUTAGENESIS OF LYS-150</scope>
</reference>
<reference key="22">
    <citation type="journal article" date="2015" name="Proteomics">
        <title>N-terminome analysis of the human mitochondrial proteome.</title>
        <authorList>
            <person name="Vaca Jacome A.S."/>
            <person name="Rabilloud T."/>
            <person name="Schaeffer-Reiss C."/>
            <person name="Rompais M."/>
            <person name="Ayoub D."/>
            <person name="Lane L."/>
            <person name="Bairoch A."/>
            <person name="Van Dorsselaer A."/>
            <person name="Carapito C."/>
        </authorList>
    </citation>
    <scope>IDENTIFICATION BY MASS SPECTROMETRY [LARGE SCALE ANALYSIS]</scope>
</reference>
<reference key="23">
    <citation type="journal article" date="2015" name="Sci. Rep.">
        <title>Rat and human STINGs profile similarly towards anticancer/antiviral compounds.</title>
        <authorList>
            <person name="Zhang H."/>
            <person name="Han M.J."/>
            <person name="Tao J."/>
            <person name="Ye Z.Y."/>
            <person name="Du X.X."/>
            <person name="Deng M.J."/>
            <person name="Zhang X.Y."/>
            <person name="Li L.F."/>
            <person name="Jiang Z.F."/>
            <person name="Su X.D."/>
        </authorList>
    </citation>
    <scope>MUTAGENESIS OF SER-162</scope>
    <scope>ACTIVITY REGULATION</scope>
</reference>
<reference key="24">
    <citation type="journal article" date="2015" name="Cell Rep.">
        <title>Bruton's tyrosine kinase phosphorylates DDX41 and activates its binding of dsDNA and STING to initiate type 1 interferon response.</title>
        <authorList>
            <person name="Lee K.G."/>
            <person name="Kim S.S."/>
            <person name="Kui L."/>
            <person name="Voon D.C."/>
            <person name="Mauduit M."/>
            <person name="Bist P."/>
            <person name="Bi X."/>
            <person name="Pereira N.A."/>
            <person name="Liu C."/>
            <person name="Sukumaran B."/>
            <person name="Renia L."/>
            <person name="Ito Y."/>
            <person name="Lam K.P."/>
        </authorList>
    </citation>
    <scope>FUNCTION</scope>
    <scope>INTERACTION WITH DDX41</scope>
</reference>
<reference key="25">
    <citation type="journal article" date="2015" name="Mol. Cell">
        <title>Ancient origin of cGAS-STING reveals mechanism of universal 2',3' cGAMP signaling.</title>
        <authorList>
            <person name="Kranzusch P.J."/>
            <person name="Wilson S.C."/>
            <person name="Lee A.S."/>
            <person name="Berger J.M."/>
            <person name="Doudna J.A."/>
            <person name="Vance R.E."/>
        </authorList>
    </citation>
    <scope>FUNCTION</scope>
    <scope>CHARACTERIZATION OF VARIANT ARG-232</scope>
</reference>
<reference key="26">
    <citation type="journal article" date="2015" name="Science">
        <title>Viruses transfer the antiviral second messenger cGAMP between cells.</title>
        <authorList>
            <person name="Bridgeman A."/>
            <person name="Maelfait J."/>
            <person name="Davenne T."/>
            <person name="Partridge T."/>
            <person name="Peng Y."/>
            <person name="Mayer A."/>
            <person name="Dong T."/>
            <person name="Kaever V."/>
            <person name="Borrow P."/>
            <person name="Rehwinkel J."/>
        </authorList>
    </citation>
    <scope>FUNCTION</scope>
</reference>
<reference key="27">
    <citation type="journal article" date="2015" name="Science">
        <title>DNA tumor virus oncogenes antagonize the cGAS-STING DNA-sensing pathway.</title>
        <authorList>
            <person name="Lau L."/>
            <person name="Gray E.E."/>
            <person name="Brunette R.L."/>
            <person name="Stetson D.B."/>
        </authorList>
    </citation>
    <scope>FUNCTION (MICROBIAL INFECTION)</scope>
    <scope>INTERACTION WITH PAPILLOMAVIRUS PROTEIN E7 AND ADENOVIRUS EARLY E1A PROTEIN (MICROBIAL INFECTION)</scope>
</reference>
<reference key="28">
    <citation type="journal article" date="2015" name="Science">
        <title>Phosphorylation of innate immune adaptor proteins MAVS, STING, and TRIF induces IRF3 activation.</title>
        <authorList>
            <person name="Liu S."/>
            <person name="Cai X."/>
            <person name="Wu J."/>
            <person name="Cong Q."/>
            <person name="Chen X."/>
            <person name="Li T."/>
            <person name="Du F."/>
            <person name="Ren J."/>
            <person name="Wu Y.T."/>
            <person name="Grishin N.V."/>
            <person name="Chen Z.J."/>
        </authorList>
    </citation>
    <scope>FUNCTION</scope>
    <scope>DOMAIN</scope>
    <scope>INTERACTION WITH IRF3</scope>
    <scope>PHOSPHORYLATION AT SER-358 AND SER-366</scope>
    <scope>MUTAGENESIS OF SER-358 AND SER-366</scope>
</reference>
<reference key="29">
    <citation type="journal article" date="2016" name="Cell Res.">
        <title>USP18 recruits USP20 to promote innate antiviral response through deubiquitinating STING/MITA.</title>
        <authorList>
            <person name="Zhang M."/>
            <person name="Zhang M.X."/>
            <person name="Zhang Q."/>
            <person name="Zhu G.F."/>
            <person name="Yuan L."/>
            <person name="Zhang D.E."/>
            <person name="Zhu Q."/>
            <person name="Yao J."/>
            <person name="Shu H.B."/>
            <person name="Zhong B."/>
        </authorList>
    </citation>
    <scope>FUNCTION</scope>
    <scope>DEUBIQUITIATION BY USP20</scope>
</reference>
<reference key="30">
    <citation type="journal article" date="2017" name="Leukemia">
        <title>ZDHHC11 and ZDHHC11B are critical novel components of the oncogenic MYC-miR-150-MYB network in Burkitt lymphoma.</title>
        <authorList>
            <person name="Dzikiewicz-Krawczyk A."/>
            <person name="Kok K."/>
            <person name="Slezak-Prochazka I."/>
            <person name="Robertus J.L."/>
            <person name="Bruining J."/>
            <person name="Tayari M.M."/>
            <person name="Rutgers B."/>
            <person name="de Jong D."/>
            <person name="Koerts J."/>
            <person name="Seitz A."/>
            <person name="Li J."/>
            <person name="Tillema B."/>
            <person name="Guikema J.E."/>
            <person name="Nolte I.M."/>
            <person name="Diepstra A."/>
            <person name="Visser L."/>
            <person name="Kluiver J."/>
            <person name="van den Berg A."/>
        </authorList>
    </citation>
    <scope>INTERACTION WITH IRF3 AND ZDHHC11</scope>
    <scope>REGION</scope>
</reference>
<reference key="31">
    <citation type="journal article" date="2017" name="Nat. Commun.">
        <title>USP13 negatively regulates antiviral responses by deubiquitinating STING.</title>
        <authorList>
            <person name="Sun H."/>
            <person name="Zhang Q."/>
            <person name="Jing Y.Y."/>
            <person name="Zhang M."/>
            <person name="Wang H.Y."/>
            <person name="Cai Z."/>
            <person name="Liuyu T."/>
            <person name="Zhang Z.D."/>
            <person name="Xiong T.C."/>
            <person name="Wu Y."/>
            <person name="Zhu Q.Y."/>
            <person name="Yao J."/>
            <person name="Shu H.B."/>
            <person name="Lin D."/>
            <person name="Zhong B."/>
        </authorList>
    </citation>
    <scope>DEUBIQUITINATION BY USP13</scope>
</reference>
<reference key="32">
    <citation type="journal article" date="2017" name="Nat. Commun.">
        <title>TRIM29 promotes DNA virus infections by inhibiting innate immune response.</title>
        <authorList>
            <person name="Xing J."/>
            <person name="Zhang A."/>
            <person name="Zhang H."/>
            <person name="Wang J."/>
            <person name="Li X.C."/>
            <person name="Zeng M.S."/>
            <person name="Zhang Z."/>
        </authorList>
    </citation>
    <scope>INTERACTION WITH TRIM29</scope>
</reference>
<reference key="33">
    <citation type="journal article" date="2018" name="Cell Host Microbe">
        <title>Dampened STING-dependent interferon activation in bats.</title>
        <authorList>
            <person name="Xie J."/>
            <person name="Li Y."/>
            <person name="Shen X."/>
            <person name="Goh G."/>
            <person name="Zhu Y."/>
            <person name="Cui J."/>
            <person name="Wang L.F."/>
            <person name="Shi Z.L."/>
            <person name="Zhou P."/>
        </authorList>
    </citation>
    <scope>MUTAGENESIS OF SER-358</scope>
</reference>
<reference key="34">
    <citation type="journal article" date="2018" name="EMBO Rep.">
        <title>Inhibition of AIM2 inflammasome activation by a novel transcript isoform of IFI16.</title>
        <authorList>
            <person name="Wang P.H."/>
            <person name="Ye Z.W."/>
            <person name="Deng J.J."/>
            <person name="Siu K.L."/>
            <person name="Gao W.W."/>
            <person name="Chaudhary V."/>
            <person name="Cheng Y."/>
            <person name="Fung S.Y."/>
            <person name="Yuen K.S."/>
            <person name="Ho T.H."/>
            <person name="Chan C.P."/>
            <person name="Zhang Y."/>
            <person name="Kok K.H."/>
            <person name="Yang W."/>
            <person name="Chan C.P."/>
            <person name="Jin D.Y."/>
        </authorList>
    </citation>
    <scope>INTERACTION WITH IFI16-BETA</scope>
</reference>
<reference key="35">
    <citation type="journal article" date="2018" name="J. Virol.">
        <title>34.5 Protein Inhibits STING Activation That Restricts Viral Replication.</title>
        <authorList>
            <person name="Pan S."/>
            <person name="Liu X."/>
            <person name="Ma Y."/>
            <person name="Cao Y."/>
            <person name="He B."/>
        </authorList>
    </citation>
    <scope>INTERACTION WITH HERPES SIMPLEX VIRUS 1 PROTEIN ICP34.5 (MICROBIAL INFECTION)</scope>
</reference>
<reference key="36">
    <citation type="journal article" date="2018" name="Nature">
        <title>Targeting STING with covalent small-molecule inhibitors.</title>
        <authorList>
            <person name="Haag S.M."/>
            <person name="Gulen M.F."/>
            <person name="Reymond L."/>
            <person name="Gibelin A."/>
            <person name="Abrami L."/>
            <person name="Decout A."/>
            <person name="Heymann M."/>
            <person name="van der Goot F.G."/>
            <person name="Turcatti G."/>
            <person name="Behrendt R."/>
            <person name="Ablasser A."/>
        </authorList>
    </citation>
    <scope>FUNCTION</scope>
    <scope>ACTIVITY REGULATION</scope>
    <scope>PALMITOYLATION AT CYS-91</scope>
    <scope>MUTAGENESIS OF CYS-91</scope>
</reference>
<reference key="37">
    <citation type="journal article" date="2019" name="Cell Death Differ.">
        <title>STING directly activates autophagy to tune the innate immune response.</title>
        <authorList>
            <person name="Liu D."/>
            <person name="Wu H."/>
            <person name="Wang C."/>
            <person name="Li Y."/>
            <person name="Tian H."/>
            <person name="Siraj S."/>
            <person name="Sehgal S.A."/>
            <person name="Wang X."/>
            <person name="Wang J."/>
            <person name="Shang Y."/>
            <person name="Jiang Z."/>
            <person name="Liu L."/>
            <person name="Chen Q."/>
        </authorList>
    </citation>
    <scope>FUNCTION</scope>
</reference>
<reference key="38">
    <citation type="journal article" date="2019" name="Nature">
        <title>Structural basis of STING binding with and phosphorylation by TBK1.</title>
        <authorList>
            <person name="Zhang C."/>
            <person name="Shang G."/>
            <person name="Gui X."/>
            <person name="Zhang X."/>
            <person name="Bai X.C."/>
            <person name="Chen Z.J."/>
        </authorList>
    </citation>
    <scope>FUNCTION</scope>
    <scope>SUBUNIT</scope>
    <scope>SUBCELLULAR LOCATION</scope>
    <scope>PHOSPHORYLATION</scope>
    <scope>MUTAGENESIS OF 238-ARG--TYR-240; GLN-273; ALA-277; PRO-371; LEU-374 AND ARG-375</scope>
</reference>
<reference key="39">
    <citation type="journal article" date="2019" name="Nature">
        <title>Autophagy induction via STING trafficking is a primordial function of the cGAS pathway.</title>
        <authorList>
            <person name="Gui X."/>
            <person name="Yang H."/>
            <person name="Li T."/>
            <person name="Tan X."/>
            <person name="Shi P."/>
            <person name="Li M."/>
            <person name="Du F."/>
            <person name="Chen Z.J."/>
        </authorList>
    </citation>
    <scope>FUNCTION</scope>
    <scope>SUBCELLULAR LOCATION</scope>
    <scope>INTERACTION WITH SEC24C</scope>
    <scope>MUTAGENESIS OF 238-ARG--TYR-240; ARG-238 AND 333-LEU-ARG-334</scope>
</reference>
<reference key="40">
    <citation type="journal article" date="2018" name="Proteomics">
        <title>Quantitative Proteomics Identified TTC4 as a TBK1 Interactor and a Positive Regulator of SeV-Induced Innate Immunity.</title>
        <authorList>
            <person name="Shang J."/>
            <person name="Xia T."/>
            <person name="Han Q.Q."/>
            <person name="Zhao X."/>
            <person name="Hu M.M."/>
            <person name="Shu H.B."/>
            <person name="Guo L."/>
        </authorList>
    </citation>
    <scope>INTERACTION WITH SURF4</scope>
</reference>
<reference key="41">
    <citation type="journal article" date="2019" name="PLoS Pathog.">
        <title>Human cytomegalovirus protein UL42 antagonizes cGAS/MITA-mediated innate antiviral response.</title>
        <authorList>
            <person name="Fu Y.Z."/>
            <person name="Guo Y."/>
            <person name="Zou H.M."/>
            <person name="Su S."/>
            <person name="Wang S.Y."/>
            <person name="Yang Q."/>
            <person name="Luo M.H."/>
            <person name="Wang Y.Y."/>
        </authorList>
    </citation>
    <scope>INTERACTION WITH HUMAN CYTOMEGALOVIRUS PROTEIN UL42 (MICROBIAL INFECTION)</scope>
</reference>
<reference key="42">
    <citation type="journal article" date="2019" name="PLoS Pathog.">
        <title>USP49 negatively regulates cellular antiviral responses via deconjugating K63-linked ubiquitination of MITA.</title>
        <authorList>
            <person name="Ye L."/>
            <person name="Zhang Q."/>
            <person name="Liuyu T."/>
            <person name="Xu Z."/>
            <person name="Zhang M.X."/>
            <person name="Luo M.H."/>
            <person name="Zeng W.B."/>
            <person name="Zhu Q."/>
            <person name="Lin D."/>
            <person name="Zhong B."/>
        </authorList>
    </citation>
    <scope>DEUBIQUITINATION BY USP49</scope>
</reference>
<reference key="43">
    <citation type="journal article" date="2019" name="Science">
        <title>Nuclear hnRNPA2B1 initiates and amplifies the innate immune response to DNA viruses.</title>
        <authorList>
            <person name="Wang L."/>
            <person name="Wen M."/>
            <person name="Cao X."/>
        </authorList>
    </citation>
    <scope>INTERACTION WITH HNRNPA2B1</scope>
</reference>
<reference key="44">
    <citation type="journal article" date="2020" name="MBio">
        <title>PPP6C negatively regulates STING-dependent innate immune responses.</title>
        <authorList>
            <person name="Ni G."/>
            <person name="Ma Z."/>
            <person name="Wong J.P."/>
            <person name="Zhang Z."/>
            <person name="Cousins E."/>
            <person name="Major M.B."/>
            <person name="Damania B."/>
        </authorList>
    </citation>
    <scope>PHOSPHORYLATION AT SER-366</scope>
    <scope>DEPHOSPHORYLATION</scope>
</reference>
<reference key="45">
    <citation type="journal article" date="2020" name="Nat. Immunol.">
        <title>STEEP mediates STING ER exit and activation of signaling.</title>
        <authorList>
            <person name="Zhang B.C."/>
            <person name="Nandakumar R."/>
            <person name="Reinert L.S."/>
            <person name="Huang J."/>
            <person name="Laustsen A."/>
            <person name="Gao Z.L."/>
            <person name="Sun C.L."/>
            <person name="Jensen S.B."/>
            <person name="Troldborg A."/>
            <person name="Assil S."/>
            <person name="Berthelsen M.F."/>
            <person name="Scavenius C."/>
            <person name="Zhang Y."/>
            <person name="Windross S.J."/>
            <person name="Olagnier D."/>
            <person name="Prabakaran T."/>
            <person name="Bodda C."/>
            <person name="Narita R."/>
            <person name="Cai Y."/>
            <person name="Zhang C.G."/>
            <person name="Stenmark H."/>
            <person name="Doucet C.M."/>
            <person name="Noda T."/>
            <person name="Guo Z."/>
            <person name="Goldbach-Mansky R."/>
            <person name="Hartmann R."/>
            <person name="Chen Z.J."/>
            <person name="Enghild J.J."/>
            <person name="Bak R.O."/>
            <person name="Thomsen M.K."/>
            <person name="Paludan S.R."/>
        </authorList>
    </citation>
    <scope>INTERACTION WITH STEEP1; SEC24A AND SEC24B</scope>
    <scope>SUBCELLULAR LOCATION</scope>
    <scope>DOMAIN</scope>
    <scope>PHOSPHORYLATION AT SER-366</scope>
    <scope>MUTAGENESIS OF 273-GLN--ALA-277</scope>
</reference>
<reference key="46">
    <citation type="journal article" date="2020" name="Nat. Immunol.">
        <authorList>
            <person name="Zhang B.C."/>
            <person name="Nandakumar R."/>
            <person name="Reinert L.S."/>
            <person name="Huang J."/>
            <person name="Laustsen A."/>
            <person name="Gao Z.L."/>
            <person name="Sun C.L."/>
            <person name="Jensen S.B."/>
            <person name="Troldborg A."/>
            <person name="Assil S."/>
            <person name="Berthelsen M.F."/>
            <person name="Scavenius C."/>
            <person name="Zhang Y."/>
            <person name="Windross S.J."/>
            <person name="Olagnier D."/>
            <person name="Prabakaran T."/>
            <person name="Bodda C."/>
            <person name="Narita R."/>
            <person name="Cai Y."/>
            <person name="Zhang C.G."/>
            <person name="Stenmark H."/>
            <person name="Doucet C.M."/>
            <person name="Noda T."/>
            <person name="Guo Z."/>
            <person name="Goldbach-Mansky R."/>
            <person name="Hartmann R."/>
            <person name="Chen Z.J."/>
            <person name="Enghild J.J."/>
            <person name="Bak R.O."/>
            <person name="Thomsen M.K."/>
            <person name="Paludan S.R."/>
        </authorList>
    </citation>
    <scope>ERRATUM OF PUBMED:32690950</scope>
</reference>
<reference key="47">
    <citation type="journal article" date="2020" name="PLoS Pathog.">
        <title>Chikungunya virus antagonizes cGAS-STING mediated type-I interferon responses by degrading cGAS.</title>
        <authorList>
            <person name="Webb L.G."/>
            <person name="Veloz J."/>
            <person name="Pintado-Silva J."/>
            <person name="Zhu T."/>
            <person name="Rangel M.V."/>
            <person name="Mutetwa T."/>
            <person name="Zhang L."/>
            <person name="Bernal-Rubio D."/>
            <person name="Figueroa D."/>
            <person name="Carrau L."/>
            <person name="Fenutria R."/>
            <person name="Potla U."/>
            <person name="Reid S.P."/>
            <person name="Yount J.S."/>
            <person name="Stapleford K.A."/>
            <person name="Aguirre S."/>
            <person name="Fernandez-Sesma A."/>
        </authorList>
    </citation>
    <scope>INTERACTION WITH CHIKUNGUNYA VIRUS NON-STRUCTURAL PROTEIN 1 (MICROBIAL INFECTION)</scope>
</reference>
<reference key="48">
    <citation type="journal article" date="2020" name="J. Virol.">
        <title>Human Cytomegalovirus Protein UL94 Targets MITA to Evade the Antiviral Immune Response.</title>
        <authorList>
            <person name="Zou H.M."/>
            <person name="Huang Z.F."/>
            <person name="Yang Y."/>
            <person name="Luo W.W."/>
            <person name="Wang S.Y."/>
            <person name="Luo M.H."/>
            <person name="Fu Y.Z."/>
            <person name="Wang Y.Y."/>
        </authorList>
    </citation>
    <scope>INTERACTION WITH HUMAN CYTOMEGALOVIRUS PROTEIN UL94 (MICROBIAL INFECTION)</scope>
</reference>
<reference key="49">
    <citation type="journal article" date="2020" name="PLoS Pathog.">
        <title>USP44 positively regulates innate immune response to DNA viruses through deubiquitinating MITA.</title>
        <authorList>
            <person name="Zhang H.Y."/>
            <person name="Liao B.W."/>
            <person name="Xu Z.S."/>
            <person name="Ran Y."/>
            <person name="Wang D.P."/>
            <person name="Yang Y."/>
            <person name="Luo W.W."/>
            <person name="Wang Y.Y."/>
        </authorList>
    </citation>
    <scope>FUNCTION</scope>
    <scope>DEUBIQUITINATION BY USP44</scope>
    <scope>MUTAGENESIS OF LYS-236</scope>
</reference>
<reference key="50">
    <citation type="journal article" date="2021" name="MBio">
        <title>Human Cytomegalovirus UL138 Protein Inhibits the STING Pathway and Reduces Interferon Beta mRNA Accumulation during Lytic and Latent Infections.</title>
        <authorList>
            <person name="Albright E.R."/>
            <person name="Mickelson C.K."/>
            <person name="Kalejta R.F."/>
        </authorList>
    </citation>
    <scope>SUBCELLULAR LOCATION</scope>
    <scope>INTERACTION WITH HUMAN CYTOMEGALOVIRUS PROTEIN UL138 (MICROBIAL INFECTION)</scope>
</reference>
<reference key="51">
    <citation type="journal article" date="2022" name="Nature">
        <title>The cGAS-STING pathway drives type I IFN immunopathology in COVID-19.</title>
        <authorList>
            <person name="Di Domizio J."/>
            <person name="Gulen M.F."/>
            <person name="Saidoune F."/>
            <person name="Thacker V.V."/>
            <person name="Yatim A."/>
            <person name="Sharma K."/>
            <person name="Nass T."/>
            <person name="Guenova E."/>
            <person name="Schaller M."/>
            <person name="Conrad C."/>
            <person name="Goepfert C."/>
            <person name="De Leval L."/>
            <person name="von Garnier C."/>
            <person name="Berezowska S."/>
            <person name="Dubois A."/>
            <person name="Gilliet M."/>
            <person name="Ablasser A."/>
        </authorList>
    </citation>
    <scope>FUNCTION</scope>
    <scope>ACTIVITY REGULATION</scope>
</reference>
<reference key="52">
    <citation type="journal article" date="2023" name="EMBO Rep.">
        <title>MARCH5 promotes STING pathway activation by suppressing polymer formation of oxidized STING.</title>
        <authorList>
            <person name="Son K."/>
            <person name="Jeong S."/>
            <person name="Eom E."/>
            <person name="Kwon D."/>
            <person name="Kang S.J."/>
        </authorList>
    </citation>
    <scope>UBIQUITINATION BY MARCHF5</scope>
</reference>
<reference key="53">
    <citation type="journal article" date="2023" name="J. Microbiol.">
        <title>Varicella-Zoster Virus ORF39 Transmembrane Protein Suppresses Interferon-Beta Promoter Activation by Interacting with STING.</title>
        <authorList>
            <person name="Lee G.M."/>
            <person name="Gong S."/>
            <person name="Seo S.W."/>
            <person name="Ko H."/>
            <person name="Chung W.C."/>
            <person name="Lee J."/>
            <person name="Shin O.S."/>
            <person name="Ahn J.H."/>
        </authorList>
    </citation>
    <scope>FUNCTION</scope>
    <scope>INTERACTION WITH VARICELLA-ZOSTER VIRUS PROTEIN 39 (MICROBIAL INFECTION)</scope>
    <scope>SUBCELLULAR LOCATION</scope>
</reference>
<reference key="54">
    <citation type="journal article" date="2022" name="Nat. Commun.">
        <title>Gain-of-function genetic screening identifies the antiviral function of TMEM120A via STING activation.</title>
        <authorList>
            <person name="Li S."/>
            <person name="Qian N."/>
            <person name="Jiang C."/>
            <person name="Zu W."/>
            <person name="Liang A."/>
            <person name="Li M."/>
            <person name="Elledge S.J."/>
            <person name="Tan X."/>
        </authorList>
    </citation>
    <scope>FUNCTION</scope>
    <scope>SUBCELLULAR LOCATION</scope>
    <scope>INTERACTION WITH TMEM120A</scope>
</reference>
<reference key="55">
    <citation type="journal article" date="2023" name="Mol. Cell">
        <title>TAK1 is an essential kinase for STING trafficking.</title>
        <authorList>
            <person name="Ma M."/>
            <person name="Dang Y."/>
            <person name="Chang B."/>
            <person name="Wang F."/>
            <person name="Xu J."/>
            <person name="Chen L."/>
            <person name="Su H."/>
            <person name="Li J."/>
            <person name="Ge B."/>
            <person name="Chen C."/>
            <person name="Liu H."/>
        </authorList>
    </citation>
    <scope>FUNCTION</scope>
    <scope>SUBCELLULAR LOCATION</scope>
    <scope>INTERACTION WITH STEEP1 AND TAB1</scope>
    <scope>PHOSPHORYLATION AT THR-229; SER-241; THR-354; SER-355 AND THR-356</scope>
    <scope>MUTAGENESIS OF GLY-158 AND SER-355</scope>
</reference>
<reference key="56">
    <citation type="journal article" date="2023" name="PLoS Pathog.">
        <title>Suppression of cGAS- and RIG-I-mediated innate immune signaling by Epstein-Barr virus deubiquitinase BPLF1.</title>
        <authorList>
            <person name="Lui W.Y."/>
            <person name="Bharti A."/>
            <person name="Wong N.M."/>
            <person name="Jangra S."/>
            <person name="Botelho M.G."/>
            <person name="Yuen K.S."/>
            <person name="Jin D.Y."/>
        </authorList>
    </citation>
    <scope>DEUBIQUITINATION BY EPSTEIN-BARR VIRUS PROTEIN BPLF1 (MICROBIAL INFECTION)</scope>
</reference>
<reference key="57">
    <citation type="journal article" date="2023" name="Science">
        <title>Human STING is a proton channel.</title>
        <authorList>
            <person name="Liu B."/>
            <person name="Carlson R.J."/>
            <person name="Pires I.S."/>
            <person name="Gentili M."/>
            <person name="Feng E."/>
            <person name="Hellier Q."/>
            <person name="Schwartz M.A."/>
            <person name="Blainey P.C."/>
            <person name="Irvine D.J."/>
            <person name="Hacohen N."/>
        </authorList>
    </citation>
    <scope>FUNCTION</scope>
    <scope>TRANSPORTER ACTIVITY</scope>
    <scope>SUBCELLULAR LOCATION</scope>
    <scope>ACTIVITY REGULATION</scope>
    <scope>MUTAGENESIS OF 273-GLN--ALA-277</scope>
</reference>
<reference key="58">
    <citation type="journal article" date="2024" name="Int. Immunopharmacol.">
        <title>RNF39 facilitates antiviral immune responses by promoting K63-linked ubiquitination of STING.</title>
        <authorList>
            <person name="Wang W."/>
            <person name="Li Q."/>
            <person name="Jia M."/>
            <person name="Wang C."/>
            <person name="Liang W."/>
            <person name="Liu Y."/>
            <person name="Kong H."/>
            <person name="Qin Y."/>
            <person name="Zhao C."/>
            <person name="Zhao W."/>
            <person name="Song H."/>
        </authorList>
    </citation>
    <scope>FUNCTION</scope>
    <scope>UBIQUITINATION BY RNF39</scope>
</reference>
<reference evidence="83 84" key="59">
    <citation type="journal article" date="2012" name="Immunity">
        <title>Structural analysis of the STING adaptor protein reveals a hydrophobic dimer interface and mode of cyclic di-GMP binding.</title>
        <authorList>
            <person name="Ouyang S."/>
            <person name="Song X."/>
            <person name="Wang Y."/>
            <person name="Ru H."/>
            <person name="Shaw N."/>
            <person name="Jiang Y."/>
            <person name="Niu F."/>
            <person name="Zhu Y."/>
            <person name="Qiu W."/>
            <person name="Parvatiyar K."/>
            <person name="Li Y."/>
            <person name="Zhang R."/>
            <person name="Cheng G."/>
            <person name="Liu Z.J."/>
        </authorList>
    </citation>
    <scope>X-RAY CRYSTALLOGRAPHY (2.15 ANGSTROMS) OF 139-379 IN COMPLEX WITH C-DI-GMP</scope>
    <scope>SUBUNIT</scope>
</reference>
<reference evidence="91 92" key="60">
    <citation type="journal article" date="2012" name="Mol. Cell">
        <title>Cyclic di-GMP sensing via the innate immune signaling protein STING.</title>
        <authorList>
            <person name="Yin Q."/>
            <person name="Tian Y."/>
            <person name="Kabaleeswaran V."/>
            <person name="Jiang X."/>
            <person name="Tu D."/>
            <person name="Eck M.J."/>
            <person name="Chen Z.J."/>
            <person name="Wu H."/>
        </authorList>
    </citation>
    <scope>X-RAY CRYSTALLOGRAPHY (2.75 ANGSTROMS) OF 139-379 IN COMPLEX WITH C-DI-GMP</scope>
    <scope>SUBUNIT</scope>
</reference>
<reference evidence="85 86" key="61">
    <citation type="journal article" date="2012" name="Nat. Struct. Mol. Biol.">
        <title>Structure of STING bound to cyclic di-GMP reveals the mechanism of cyclic dinucleotide recognition by the immune system.</title>
        <authorList>
            <person name="Shu C."/>
            <person name="Yi G."/>
            <person name="Watts T."/>
            <person name="Kao C.C."/>
            <person name="Li P."/>
        </authorList>
    </citation>
    <scope>X-RAY CRYSTALLOGRAPHY (1.5 ANGSTROMS) OF 155-341 IN COMPLEX WITH C-DI-GMP</scope>
    <scope>SUBUNIT</scope>
    <scope>MUTAGENESIS OF SER-162; GLY-166; TYR-240; ASN-242; GLU-260; THR-263; PRO-264 AND THR-267</scope>
</reference>
<reference evidence="89 90" key="62">
    <citation type="journal article" date="2012" name="Nat. Struct. Mol. Biol.">
        <title>Crystal structures of STING protein reveal basis for recognition of cyclic di-GMP.</title>
        <authorList>
            <person name="Shang G."/>
            <person name="Zhu D."/>
            <person name="Li N."/>
            <person name="Zhang J."/>
            <person name="Zhu C."/>
            <person name="Lu D."/>
            <person name="Liu C."/>
            <person name="Yu Q."/>
            <person name="Zhao Y."/>
            <person name="Xu S."/>
            <person name="Gu L."/>
        </authorList>
    </citation>
    <scope>X-RAY CRYSTALLOGRAPHY (2.2 ANGSTROMS) OF 149-379 IN COMPLEX WITH C-DI-GMP</scope>
    <scope>SUBUNIT</scope>
</reference>
<reference evidence="87 88" key="63">
    <citation type="journal article" date="2012" name="Nat. Struct. Mol. Biol.">
        <title>The structural basis for the sensing and binding of cyclic di-GMP by STING.</title>
        <authorList>
            <person name="Huang Y.H."/>
            <person name="Liu X.Y."/>
            <person name="Du X.X."/>
            <person name="Jiang Z.F."/>
            <person name="Su X.D."/>
        </authorList>
    </citation>
    <scope>X-RAY CRYSTALLOGRAPHY (2.6 ANGSTROMS) OF 141-379 IN COMPLEX WITH C-DI-GMP</scope>
    <scope>SUBUNIT</scope>
</reference>
<reference evidence="94 95" key="64">
    <citation type="journal article" date="2013" name="Cell">
        <title>Structure-function analysis of STING activation by c[G(2',5')pA(3',5')p] and targeting by antiviral DMXAA.</title>
        <authorList>
            <person name="Gao P."/>
            <person name="Ascano M."/>
            <person name="Zillinger T."/>
            <person name="Wang W."/>
            <person name="Dai P."/>
            <person name="Serganov A.A."/>
            <person name="Gaffney B.L."/>
            <person name="Shuman S."/>
            <person name="Jones R.A."/>
            <person name="Deng L."/>
            <person name="Hartmann G."/>
            <person name="Barchet W."/>
            <person name="Tuschl T."/>
            <person name="Patel D.J."/>
        </authorList>
    </citation>
    <scope>X-RAY CRYSTALLOGRAPHY (1.89 ANGSTROMS) OF 155-341 IN COMPLEX WITH CGAMP</scope>
    <scope>FUNCTION</scope>
    <scope>ACTIVITY REGULATION</scope>
    <scope>MUTAGENESIS OF SER-162; ARG-238; TYR-240; ASN-242 AND GLU-260</scope>
</reference>
<reference evidence="93" key="65">
    <citation type="journal article" date="2013" name="Mol. Cell">
        <title>Cyclic GMP-AMP containing mixed phosphodiester linkages is an endogenous high-affinity ligand for STING.</title>
        <authorList>
            <person name="Zhang X."/>
            <person name="Shi H."/>
            <person name="Wu J."/>
            <person name="Zhang X."/>
            <person name="Sun L."/>
            <person name="Chen C."/>
            <person name="Chen Z.J."/>
        </authorList>
    </citation>
    <scope>X-RAY CRYSTALLOGRAPHY (1.88 ANGSTROMS) OF 138-379 IN COMPLEX WITH CGAMP</scope>
    <scope>FUNCTION</scope>
</reference>
<reference evidence="96 97 98 99" key="66">
    <citation type="journal article" date="2014" name="Cell Rep.">
        <title>Binding-pocket and lid-region substitutions render human STING sensitive to the species-specific drug DMXAA.</title>
        <authorList>
            <person name="Gao P."/>
            <person name="Zillinger T."/>
            <person name="Wang W."/>
            <person name="Ascano M."/>
            <person name="Dai P."/>
            <person name="Hartmann G."/>
            <person name="Tuschl T."/>
            <person name="Deng L."/>
            <person name="Barchet W."/>
            <person name="Patel D.J."/>
        </authorList>
    </citation>
    <scope>X-RAY CRYSTALLOGRAPHY (1.88 ANGSTROMS) OF 155-341 OF MUTANTS IN COMPLEX WITH DMXAA</scope>
    <scope>ACTIVITY REGULATION</scope>
    <scope>MUTAGENESIS OF SER-162; GLY-230 AND GLN-266</scope>
</reference>
<reference evidence="100" key="67">
    <citation type="journal article" date="2015" name="Proc. Natl. Acad. Sci. U.S.A.">
        <title>Molecular basis for the specific recognition of the metazoan cyclic GMP-AMP by the innate immune adaptor protein STING.</title>
        <authorList>
            <person name="Shi H."/>
            <person name="Wu J."/>
            <person name="Chen Z.J."/>
            <person name="Chen C."/>
        </authorList>
    </citation>
    <scope>X-RAY CRYSTALLOGRAPHY (2.00 ANGSTROMS) OF 138-379 IN COMPLEX WITH 3'2'-CGAMP</scope>
</reference>
<reference evidence="101" key="68">
    <citation type="journal article" date="2016" name="Proc. Natl. Acad. Sci. U.S.A.">
        <title>Structural basis for concerted recruitment and activation of IRF-3 by innate immune adaptor proteins.</title>
        <authorList>
            <person name="Zhao B."/>
            <person name="Shu C."/>
            <person name="Gao X."/>
            <person name="Sankaran B."/>
            <person name="Du F."/>
            <person name="Shelton C.L."/>
            <person name="Herr A.B."/>
            <person name="Ji J.Y."/>
            <person name="Li P."/>
        </authorList>
    </citation>
    <scope>X-RAY CRYSTALLOGRAPHY (2.00 ANGSTROMS) OF 342-379</scope>
    <scope>INTERACTION WITH IRF3</scope>
    <scope>PHOSPHORYLATION AT SER-366</scope>
    <scope>MUTAGENESIS OF SER-358; GLU-362; LEU-363; LEU-364; ILE-365; SER-366; THR-376 AND SER-379</scope>
</reference>
<reference key="69">
    <citation type="journal article" date="2019" name="Nature">
        <title>Cryo-EM structures of STING reveal its mechanism of activation by cyclic GMP-AMP.</title>
        <authorList>
            <person name="Shang G."/>
            <person name="Zhang C."/>
            <person name="Chen Z.J."/>
            <person name="Bai X.C."/>
            <person name="Zhang X."/>
        </authorList>
    </citation>
    <scope>STRUCTURE BY ELECTRON MICROSCOPY (4.1 ANGSTROMS) OF 1-379</scope>
    <scope>FUNCTION</scope>
    <scope>SUBCELLULAR LOCATION</scope>
    <scope>PHOSPHORYLATION</scope>
    <scope>MUTAGENESIS OF ILE-10; ARG-14; GLU-68; GLU-69; PHE-153 AND GLY-158</scope>
    <scope>CHARACTERIZATION OF VARIANT SAVI MET-155</scope>
</reference>
<reference evidence="102 103 104" key="70">
    <citation type="journal article" date="2019" name="ACS Med. Chem. Lett.">
        <title>Discovery of a novel cGAMP competitive ligand of the inactive form of STING.</title>
        <authorList>
            <person name="Siu T."/>
            <person name="Altman M.D."/>
            <person name="Baltus G.A."/>
            <person name="Childers M."/>
            <person name="Ellis J.M."/>
            <person name="Gunaydin H."/>
            <person name="Hatch H."/>
            <person name="Ho T."/>
            <person name="Jewell J."/>
            <person name="Lacey B.M."/>
            <person name="Lesburg C.A."/>
            <person name="Pan B.S."/>
            <person name="Sauvagnat B."/>
            <person name="Schroeder G.K."/>
            <person name="Xu S."/>
        </authorList>
    </citation>
    <scope>X-RAY CRYSTALLOGRAPHY (1.36 ANGSTROMS) OF 155-341 IN COMPLEX WITH COMPOUND 18 INHIBITOR</scope>
    <scope>ACTIVITY REGULATION</scope>
</reference>
<reference evidence="105" key="71">
    <citation type="journal article" date="2022" name="Nature">
        <title>Activation of STING by targeting a pocket in the transmembrane domain.</title>
        <authorList>
            <person name="Lu D."/>
            <person name="Shang G."/>
            <person name="Li J."/>
            <person name="Lu Y."/>
            <person name="Bai X.C."/>
            <person name="Zhang X."/>
        </authorList>
    </citation>
    <scope>STRUCTURE BY ELECTRON MICROSCOPY (3.45 ANGSTROMS) OF 1-344 IN COMPLEX WITH 2'3'-CGAMP</scope>
    <scope>FUNCTION</scope>
    <scope>ACTIVITY REGULATION</scope>
    <scope>SUBUNIT</scope>
    <scope>MUTAGENESIS OF LEU-26; LEU-30; LEU-44 AND TYR-104</scope>
</reference>
<reference evidence="106" key="72">
    <citation type="journal article" date="2023" name="Cell">
        <title>cGLRs are a diverse family of pattern recognition receptors in innate immunity.</title>
        <authorList>
            <person name="Li Y."/>
            <person name="Slavik K.M."/>
            <person name="Toyoda H.C."/>
            <person name="Morehouse B.R."/>
            <person name="de Oliveira Mann C.C."/>
            <person name="Elek A."/>
            <person name="Levy S."/>
            <person name="Wang Z."/>
            <person name="Mears K.S."/>
            <person name="Liu J."/>
            <person name="Kashin D."/>
            <person name="Guo X."/>
            <person name="Mass T."/>
            <person name="Sebe-Pedros A."/>
            <person name="Schwede F."/>
            <person name="Kranzusch P.J."/>
        </authorList>
    </citation>
    <scope>X-RAY CRYSTALLOGRAPHY (2.60 ANGSTROMS) OF 154-341 IN COMPLEX WITH CUAMP</scope>
    <scope>FUNCTION</scope>
</reference>
<reference key="73">
    <citation type="journal article" date="2014" name="J. Clin. Invest.">
        <title>Inherited STING-activating mutation underlies a familial inflammatory syndrome with lupus-like manifestations.</title>
        <authorList>
            <person name="Jeremiah N."/>
            <person name="Neven B."/>
            <person name="Gentili M."/>
            <person name="Callebaut I."/>
            <person name="Maschalidi S."/>
            <person name="Stolzenberg M.C."/>
            <person name="Goudin N."/>
            <person name="Fremond M.L."/>
            <person name="Nitschke P."/>
            <person name="Molina T.J."/>
            <person name="Blanche S."/>
            <person name="Picard C."/>
            <person name="Rice G.I."/>
            <person name="Crow Y.J."/>
            <person name="Manel N."/>
            <person name="Fischer A."/>
            <person name="Bader-Meunier B."/>
            <person name="Rieux-Laucat F."/>
        </authorList>
    </citation>
    <scope>VARIANT SAVI MET-155</scope>
    <scope>CHARACTERIZATION OF VARIANT SAVI MET-155</scope>
</reference>
<reference key="74">
    <citation type="journal article" date="2014" name="N. Engl. J. Med.">
        <title>Activated STING in a vascular and pulmonary syndrome.</title>
        <authorList>
            <person name="Liu Y."/>
            <person name="Jesus A.A."/>
            <person name="Marrero B."/>
            <person name="Yang D."/>
            <person name="Ramsey S.E."/>
            <person name="Montealegre Sanchez G.A."/>
            <person name="Tenbrock K."/>
            <person name="Wittkowski H."/>
            <person name="Jones O.Y."/>
            <person name="Kuehn H.S."/>
            <person name="Lee C.C."/>
            <person name="DiMattia M.A."/>
            <person name="Cowen E.W."/>
            <person name="Gonzalez B."/>
            <person name="Palmer I."/>
            <person name="DiGiovanna J.J."/>
            <person name="Biancotto A."/>
            <person name="Kim H."/>
            <person name="Tsai W.L."/>
            <person name="Trier A.M."/>
            <person name="Huang Y."/>
            <person name="Stone D.L."/>
            <person name="Hill S."/>
            <person name="Kim H.J."/>
            <person name="St Hilaire C."/>
            <person name="Gurprasad S."/>
            <person name="Plass N."/>
            <person name="Chapelle D."/>
            <person name="Horkayne-Szakaly I."/>
            <person name="Foell D."/>
            <person name="Barysenka A."/>
            <person name="Candotti F."/>
            <person name="Holland S.M."/>
            <person name="Hughes J.D."/>
            <person name="Mehmet H."/>
            <person name="Issekutz A.C."/>
            <person name="Raffeld M."/>
            <person name="McElwee J."/>
            <person name="Fontana J.R."/>
            <person name="Minniti C.P."/>
            <person name="Moir S."/>
            <person name="Kastner D.L."/>
            <person name="Gadina M."/>
            <person name="Steven A.C."/>
            <person name="Wingfield P.T."/>
            <person name="Brooks S.R."/>
            <person name="Rosenzweig S.D."/>
            <person name="Fleisher T.A."/>
            <person name="Deng Z."/>
            <person name="Boehm M."/>
            <person name="Paller A.S."/>
            <person name="Goldbach-Mansky R."/>
        </authorList>
    </citation>
    <scope>VARIANTS SAVI LEU-147; SER-154 AND MET-155</scope>
    <scope>TISSUE SPECIFICITY</scope>
</reference>
<reference key="75">
    <citation type="journal article" date="2018" name="Cell Rep.">
        <title>Pro-inflammation associated with a gain-of-function mutation (R284S) in the innate immune sensor STING.</title>
        <authorList>
            <person name="Konno H."/>
            <person name="Chinn I.K."/>
            <person name="Hong D."/>
            <person name="Orange J.S."/>
            <person name="Lupski J.R."/>
            <person name="Mendoza A."/>
            <person name="Pedroza L.A."/>
            <person name="Barber G.N."/>
        </authorList>
    </citation>
    <scope>VARIANT SER-284</scope>
    <scope>CHARACTERIZATION OF VARIANT SER-284</scope>
    <scope>SUBCELLULAR LOCATION</scope>
</reference>
<comment type="function">
    <text evidence="2 6 7 10 11 14 15 21 22 23 24 25 26 33 34 35 36 37 41 48 51 53 54 55 65 66 68 69 70 71 73">Facilitator of innate immune signaling that acts as a sensor of cytosolic DNA from bacteria and viruses and promotes the production of type I interferon (IFN-alpha and IFN-beta) (PubMed:18724357, PubMed:18818105, PubMed:19433799, PubMed:19776740, PubMed:23027953, PubMed:23747010, PubMed:23910378, PubMed:27801882, PubMed:29973723, PubMed:30842659, PubMed:35045565, PubMed:35388221, PubMed:36808561, PubMed:37832545, PubMed:25704810, PubMed:39255680). Innate immune response is triggered in response to non-CpG double-stranded DNA from viruses and bacteria delivered to the cytoplasm (PubMed:26300263). Acts by binding cyclic dinucleotides: recognizes and binds cyclic di-GMP (c-di-GMP), a second messenger produced by bacteria, cyclic UMP-AMP (2',3'-cUAMP), and cyclic GMP-AMP (cGAMP), a messenger produced by CGAS in response to DNA virus in the cytosol (PubMed:21947006, PubMed:23258412, PubMed:23707065, PubMed:23722158, PubMed:23747010, PubMed:23910378, PubMed:26229117, PubMed:30842659, PubMed:35388221, PubMed:37379839). Upon binding to c-di-GMP, cUAMP or cGAMP, STING1 oligomerizes, translocates from the endoplasmic reticulum and is phosphorylated by TBK1 on the pLxIS motif, leading to recruitment and subsequent activation of the transcription factor IRF3 to induce expression of type I interferon and exert a potent anti-viral state (PubMed:22394562, PubMed:25636800, PubMed:29973723, PubMed:30842653, PubMed:35045565, PubMed:35388221). Exhibits 2',3' phosphodiester linkage-specific ligand recognition: can bind both 2'-3' linked cGAMP (2'-3'-cGAMP) and 3'-3' linked cGAMP but is preferentially activated by 2'-3' linked cGAMP (PubMed:23747010, PubMed:23910378, PubMed:26300263). The preference for 2'-3'-cGAMP, compared to other linkage isomers is probably due to the ligand itself, whichs adopts an organized free-ligand conformation that resembles the STING1-bound conformation and pays low energy costs in changing into the active conformation (PubMed:26150511). In addition to promote the production of type I interferons, plays a direct role in autophagy (PubMed:30568238, PubMed:30842662). Following cGAMP-binding, STING1 buds from the endoplasmic reticulum into COPII vesicles, which then form the endoplasmic reticulum-Golgi intermediate compartment (ERGIC) (PubMed:30842662). The ERGIC serves as the membrane source for WIPI2 recruitment and LC3 lipidation, leading to formation of autophagosomes that target cytosolic DNA or DNA viruses for degradation by the lysosome (PubMed:30842662). Promotes autophagy by acting as a proton channel that directs proton efflux from the Golgi to facilitate MAP1LC3B/LC3B lipidation (PubMed:37535724). The autophagy- and interferon-inducing activities can be uncoupled and autophagy induction is independent of TBK1 phosphorylation (PubMed:30568238, PubMed:30842662). Autophagy is also triggered upon infection by bacteria: following c-di-GMP-binding, which is produced by live Gram-positive bacteria, promotes reticulophagy (By similarity). May be involved in translocon function, the translocon possibly being able to influence the induction of type I interferons (PubMed:18724357). May be involved in transduction of apoptotic signals via its association with the major histocompatibility complex class II (MHC-II) (By similarity).</text>
</comment>
<comment type="function">
    <text evidence="38">(Microbial infection) Antiviral activity is antagonized by oncoproteins, such as papillomavirus (HPV) protein E7 and adenovirus early E1A protein (PubMed:26405230). Such oncoproteins prevent the ability to sense cytosolic DNA (PubMed:26405230).</text>
</comment>
<comment type="catalytic activity">
    <reaction evidence="70">
        <text>H(+)(in) = H(+)(out)</text>
        <dbReference type="Rhea" id="RHEA:34979"/>
        <dbReference type="ChEBI" id="CHEBI:15378"/>
    </reaction>
</comment>
<comment type="activity regulation">
    <text evidence="26 28 31 39 48 52 65 66 70">Activated upon binding to the hydrolysis-resistant 2'3'-cG(s)A(s)MP, an analog of cGAMP, in which phosphodiester linkages are replaced by phosphothioate linkages (PubMed:25344812). Specifically inhibited by small-molecule H-151 (N-(4-ethylphenyl)-N'-1H-indol-3-yl-urea), which covalently binds Cys-91 and prevents palmitoylation and subsequent activation of STING1 (PubMed:29973723, PubMed:35045565). In contrast to mouse protein, not activated by anticancer molecule 5,6-dimethylxanthenone 4-acetic acid (DMXAA) (PubMed:23910378, PubMed:25199835, PubMed:26669264). Inhibited by compound 18 ([(3S,4S)-2-(4-tert-butyl-3-chlorophenyl)-3-(2,3-dihydro-1,4-benzodioxin-6-yl)-7-fluoro-1-oxo-1,2,3,4-tetrahydroisoquinolin-4-yl]acetate), a competitive inhibitor with slow dissociation kinetics and good oral bioavailability (PubMed:30655953). Homooligomerization and ability to promote the production of type I interferons is activated by C53, a small benzothiazinone-like compound that binds to the transmembrane regions. in the area of the putative pore (PubMed:35388221). In contrast, compound C53, directly inhibits the proton channel activity and facilitate MAP1LC3B/LC3B lipidation and autophagosome formation (PubMed:37535724).</text>
</comment>
<comment type="subunit">
    <text evidence="2 6 7 8 9 12 13 15 16 17 18 19 20 30 33 34 40 42 44 45 50 54 55 58 64 66 71 81">Homodimer; forms a homodimer in absence of cyclic nucleotide (c-di-GMP or cGAMP); 'Lys-63'-linked ubiquitination at Lys-150 is required for homodimerization (PubMed:19285439, PubMed:22579474, PubMed:22705373, PubMed:22728658, PubMed:22728659, PubMed:22728660, PubMed:30842659). Homotetramer; in presence of cyclic nucleotide (c-di-GMP or cGAMP), forms tetramers and higher-order oligomers through side-by-side packing (PubMed:30842653, PubMed:35388221). Interacts (when phosphorylated) with IRF3; following activation and phosphorylation on the pLxIS motif by TBK1, recruits IRF3 (PubMed:22394562, PubMed:25636800, PubMed:27302953, PubMed:28331227). Interacts with RIGI, MAVS and SSR2 (PubMed:18724357, PubMed:18818105). Interacts with RNF5 and TRIM56 (PubMed:19285439, PubMed:21074459). Interacts with TBK1; when homodimer, leading to subsequent production of IFN-beta (PubMed:19416887). Interacts with IFIT1 and IFIT2 (PubMed:19416887). Interacts with TRIM29; this interaction induces STING1 ubiquitination and subsequent degradation (PubMed:29038422). Associates with the MHC-II complex (By similarity). Interacts with STEEP1; interaction takes place upon cGAMP-activation and STING1 phosphorylation by MAP3K7/TAK1 and promotes STING1 translocation to COPII vesicles (PubMed:32690950, PubMed:37832545). Interacts with SEC24A, SEC24B, and SEC24C; promoting translocation to COPII vesicles (PubMed:30842662, PubMed:32690950). Interacts (when ubiquitinated) with SQSTM1; leading to relocalization to autophagosomes (By similarity). Interacts with SURF4 (PubMed:29251827). Interacts with HNRNPA2B1 (PubMed:31320558). Interacts with ZDHHC1; ZDHHC1 constitutively interacts with STING1 and in presence of DNA viruses activates it by promoting its cGAMP-induced oligomerization and the recruitment of downstream signaling components (PubMed:25299331). Interacts with ZDHHC11; in presence of DNA viruses promotes the recruitment of IRF3 to STING1 (PubMed:28331227). Interacts with TOMM70 (PubMed:20628368). Interacts with isoform IFI16-beta of IFI16 (PubMed:30104205). Interacts with TAB1; promoting recruitment of TAB1 to the endoplasmic reticulum membrane and subsequent activation of MAP3K7/TAK1 (PubMed:37832545). Interacts (via transmembrane domain) with TMEM203 (By similarity). Interacts with DDX41 (PubMed:25704810). Interacts with TMEM120A (via C-terminal domain); regulates the trafficking of STING1 from the ER to the ER-Golgi intermediate compartment to elicit antiviral effects (PubMed:35013224).</text>
</comment>
<comment type="subunit">
    <text evidence="38">(Microbial infection) Interacts with human papillomavirus (HPV) protein E7.</text>
</comment>
<comment type="subunit">
    <text evidence="38">(Microbial infection) Interacts with adenovirus early E1A protein.</text>
</comment>
<comment type="subunit">
    <text evidence="49">(Microbial infection) Interacts with herpes simplex virus 1 protein ICP34.5; this interaction inhibits the intracellular DNA sensing pathway.</text>
</comment>
<comment type="subunit">
    <text evidence="62">(Microbial infection) Interacts with Chikungunya virus non-structural protein 1; this interaction results in inhibition of cGAS-STING signaling and increased levels of palmitoylated nsP1 and protein stabilization.</text>
</comment>
<comment type="subunit">
    <text evidence="57 62 63">(Microbial infection) Interacts with human cytomegalovirus proteins UL94, UL42 and UL138; these interactions result in the inhibition of cGAS-STING signaling.</text>
</comment>
<comment type="subunit">
    <text evidence="68">(Microbial infection) Interacts with varivella virus protein 39; this interaction results in the inhibition of cGAS-STING signaling.</text>
</comment>
<comment type="interaction">
    <interactant intactId="EBI-2800345">
        <id>Q86WV6</id>
    </interactant>
    <interactant intactId="EBI-720151">
        <id>Q96A33</id>
        <label>CCDC47</label>
    </interactant>
    <organismsDiffer>false</organismsDiffer>
    <experiments>2</experiments>
</comment>
<comment type="interaction">
    <interactant intactId="EBI-2800345">
        <id>Q86WV6</id>
    </interactant>
    <interactant intactId="EBI-11522780">
        <id>Q96DZ9-2</id>
        <label>CMTM5</label>
    </interactant>
    <organismsDiffer>false</organismsDiffer>
    <experiments>3</experiments>
</comment>
<comment type="interaction">
    <interactant intactId="EBI-2800345">
        <id>Q86WV6</id>
    </interactant>
    <interactant intactId="EBI-358866">
        <id>P39656</id>
        <label>DDOST</label>
    </interactant>
    <organismsDiffer>false</organismsDiffer>
    <experiments>2</experiments>
</comment>
<comment type="interaction">
    <interactant intactId="EBI-2800345">
        <id>Q86WV6</id>
    </interactant>
    <interactant intactId="EBI-2867186">
        <id>Q16666</id>
        <label>IFI16</label>
    </interactant>
    <organismsDiffer>false</organismsDiffer>
    <experiments>2</experiments>
</comment>
<comment type="interaction">
    <interactant intactId="EBI-2800345">
        <id>Q86WV6</id>
    </interactant>
    <interactant intactId="EBI-745117">
        <id>P09914</id>
        <label>IFIT1</label>
    </interactant>
    <organismsDiffer>false</organismsDiffer>
    <experiments>3</experiments>
</comment>
<comment type="interaction">
    <interactant intactId="EBI-2800345">
        <id>Q86WV6</id>
    </interactant>
    <interactant intactId="EBI-3507167">
        <id>P09913</id>
        <label>IFIT2</label>
    </interactant>
    <organismsDiffer>false</organismsDiffer>
    <experiments>3</experiments>
</comment>
<comment type="interaction">
    <interactant intactId="EBI-2800345">
        <id>Q86WV6</id>
    </interactant>
    <interactant intactId="EBI-358664">
        <id>P51617</id>
        <label>IRAK1</label>
    </interactant>
    <organismsDiffer>false</organismsDiffer>
    <experiments>2</experiments>
</comment>
<comment type="interaction">
    <interactant intactId="EBI-2800345">
        <id>Q86WV6</id>
    </interactant>
    <interactant intactId="EBI-750776">
        <id>O95214</id>
        <label>LEPROTL1</label>
    </interactant>
    <organismsDiffer>false</organismsDiffer>
    <experiments>3</experiments>
</comment>
<comment type="interaction">
    <interactant intactId="EBI-2800345">
        <id>Q86WV6</id>
    </interactant>
    <interactant intactId="EBI-1044684">
        <id>O94822</id>
        <label>LTN1</label>
    </interactant>
    <organismsDiffer>false</organismsDiffer>
    <experiments>2</experiments>
</comment>
<comment type="interaction">
    <interactant intactId="EBI-2800345">
        <id>Q86WV6</id>
    </interactant>
    <interactant intactId="EBI-995373">
        <id>Q7Z434</id>
        <label>MAVS</label>
    </interactant>
    <organismsDiffer>false</organismsDiffer>
    <experiments>9</experiments>
</comment>
<comment type="interaction">
    <interactant intactId="EBI-2800345">
        <id>Q86WV6</id>
    </interactant>
    <interactant intactId="EBI-15577799">
        <id>Q7Z434-1</id>
        <label>MAVS</label>
    </interactant>
    <organismsDiffer>false</organismsDiffer>
    <experiments>7</experiments>
</comment>
<comment type="interaction">
    <interactant intactId="EBI-2800345">
        <id>Q86WV6</id>
    </interactant>
    <interactant intactId="EBI-6116499">
        <id>Q96N66</id>
        <label>MBOAT7</label>
    </interactant>
    <organismsDiffer>false</organismsDiffer>
    <experiments>2</experiments>
</comment>
<comment type="interaction">
    <interactant intactId="EBI-2800345">
        <id>Q86WV6</id>
    </interactant>
    <interactant intactId="EBI-3919291">
        <id>Q9Y342</id>
        <label>PLLP</label>
    </interactant>
    <organismsDiffer>false</organismsDiffer>
    <experiments>3</experiments>
</comment>
<comment type="interaction">
    <interactant intactId="EBI-2800345">
        <id>Q86WV6</id>
    </interactant>
    <interactant intactId="EBI-14065960">
        <id>Q96HR9-2</id>
        <label>REEP6</label>
    </interactant>
    <organismsDiffer>false</organismsDiffer>
    <experiments>3</experiments>
</comment>
<comment type="interaction">
    <interactant intactId="EBI-2800345">
        <id>Q86WV6</id>
    </interactant>
    <interactant intactId="EBI-15577823">
        <id>O95786-1</id>
        <label>RIGI</label>
    </interactant>
    <organismsDiffer>false</organismsDiffer>
    <experiments>2</experiments>
</comment>
<comment type="interaction">
    <interactant intactId="EBI-2800345">
        <id>Q86WV6</id>
    </interactant>
    <interactant intactId="EBI-1046170">
        <id>O95470</id>
        <label>SGPL1</label>
    </interactant>
    <organismsDiffer>false</organismsDiffer>
    <experiments>2</experiments>
</comment>
<comment type="interaction">
    <interactant intactId="EBI-2800345">
        <id>Q86WV6</id>
    </interactant>
    <interactant intactId="EBI-12188413">
        <id>B2RUZ4</id>
        <label>SMIM1</label>
    </interactant>
    <organismsDiffer>false</organismsDiffer>
    <experiments>3</experiments>
</comment>
<comment type="interaction">
    <interactant intactId="EBI-2800345">
        <id>Q86WV6</id>
    </interactant>
    <interactant intactId="EBI-2822012">
        <id>P43308</id>
        <label>SSR2</label>
    </interactant>
    <organismsDiffer>false</organismsDiffer>
    <experiments>4</experiments>
</comment>
<comment type="interaction">
    <interactant intactId="EBI-2800345">
        <id>Q86WV6</id>
    </interactant>
    <interactant intactId="EBI-1186478">
        <id>P42226</id>
        <label>STAT6</label>
    </interactant>
    <organismsDiffer>false</organismsDiffer>
    <experiments>12</experiments>
</comment>
<comment type="interaction">
    <interactant intactId="EBI-2800345">
        <id>Q86WV6</id>
    </interactant>
    <interactant intactId="EBI-2800345">
        <id>Q86WV6</id>
        <label>STING1</label>
    </interactant>
    <organismsDiffer>false</organismsDiffer>
    <experiments>14</experiments>
</comment>
<comment type="interaction">
    <interactant intactId="EBI-2800345">
        <id>Q86WV6</id>
    </interactant>
    <interactant intactId="EBI-719212">
        <id>P46977</id>
        <label>STT3A</label>
    </interactant>
    <organismsDiffer>false</organismsDiffer>
    <experiments>2</experiments>
</comment>
<comment type="interaction">
    <interactant intactId="EBI-2800345">
        <id>Q86WV6</id>
    </interactant>
    <interactant intactId="EBI-714206">
        <id>Q13190</id>
        <label>STX5</label>
    </interactant>
    <organismsDiffer>false</organismsDiffer>
    <experiments>3</experiments>
</comment>
<comment type="interaction">
    <interactant intactId="EBI-2800345">
        <id>Q86WV6</id>
    </interactant>
    <interactant intactId="EBI-1044848">
        <id>O15260</id>
        <label>SURF4</label>
    </interactant>
    <organismsDiffer>false</organismsDiffer>
    <experiments>3</experiments>
</comment>
<comment type="interaction">
    <interactant intactId="EBI-2800345">
        <id>Q86WV6</id>
    </interactant>
    <interactant intactId="EBI-356402">
        <id>Q9UHD2</id>
        <label>TBK1</label>
    </interactant>
    <organismsDiffer>false</organismsDiffer>
    <experiments>9</experiments>
</comment>
<comment type="interaction">
    <interactant intactId="EBI-2800345">
        <id>Q86WV6</id>
    </interactant>
    <interactant intactId="EBI-2877718">
        <id>Q9NZ01</id>
        <label>TECR</label>
    </interactant>
    <organismsDiffer>false</organismsDiffer>
    <experiments>3</experiments>
</comment>
<comment type="interaction">
    <interactant intactId="EBI-2800345">
        <id>Q86WV6</id>
    </interactant>
    <interactant intactId="EBI-8644968">
        <id>Q9NV29</id>
        <label>TMEM100</label>
    </interactant>
    <organismsDiffer>false</organismsDiffer>
    <experiments>3</experiments>
</comment>
<comment type="interaction">
    <interactant intactId="EBI-2800345">
        <id>Q86WV6</id>
    </interactant>
    <interactant intactId="EBI-751204">
        <id>Q9BWQ6</id>
        <label>YIPF2</label>
    </interactant>
    <organismsDiffer>false</organismsDiffer>
    <experiments>3</experiments>
</comment>
<comment type="interaction">
    <interactant intactId="EBI-2800345">
        <id>Q86WV6</id>
    </interactant>
    <interactant intactId="EBI-25622115">
        <id>PRO_0000283876</id>
        <label>rep</label>
        <dbReference type="UniProtKB" id="P0C6X5"/>
    </interactant>
    <organismsDiffer>true</organismsDiffer>
    <experiments>4</experiments>
</comment>
<comment type="interaction">
    <interactant intactId="EBI-2800345">
        <id>Q86WV6</id>
    </interactant>
    <interactant intactId="EBI-25474079">
        <id>PRO_0000037311</id>
        <label>rep</label>
        <dbReference type="UniProtKB" id="P0C6X7"/>
    </interactant>
    <organismsDiffer>true</organismsDiffer>
    <experiments>2</experiments>
</comment>
<comment type="interaction">
    <interactant intactId="EBI-2800345">
        <id>Q86WV6</id>
    </interactant>
    <interactant intactId="EBI-2603114">
        <id>P03255</id>
    </interactant>
    <organismsDiffer>true</organismsDiffer>
    <experiments>2</experiments>
</comment>
<comment type="interaction">
    <interactant intactId="EBI-2800345">
        <id>Q86WV6</id>
    </interactant>
    <interactant intactId="EBI-8763498">
        <id>PRO_0000037575</id>
        <dbReference type="UniProtKB" id="P27958"/>
    </interactant>
    <organismsDiffer>true</organismsDiffer>
    <experiments>5</experiments>
</comment>
<comment type="interaction">
    <interactant intactId="EBI-2800345">
        <id>Q86WV6</id>
    </interactant>
    <interactant intactId="EBI-6928570">
        <id>PRO_0000045601</id>
        <dbReference type="UniProtKB" id="Q99IB8"/>
    </interactant>
    <organismsDiffer>true</organismsDiffer>
    <experiments>5</experiments>
</comment>
<comment type="subcellular location">
    <subcellularLocation>
        <location evidence="6 8 10 11 29 47 53 54 60 71">Endoplasmic reticulum membrane</location>
        <topology evidence="3 54 60">Multi-pass membrane protein</topology>
    </subcellularLocation>
    <subcellularLocation>
        <location evidence="10 47 53">Cytoplasm</location>
        <location evidence="10 47 53">Perinuclear region</location>
    </subcellularLocation>
    <subcellularLocation>
        <location evidence="55 60 71">Endoplasmic reticulum-Golgi intermediate compartment membrane</location>
        <topology evidence="3 60">Multi-pass membrane protein</topology>
    </subcellularLocation>
    <subcellularLocation>
        <location evidence="53 63 68 70">Golgi apparatus membrane</location>
        <topology evidence="3">Multi-pass membrane protein</topology>
    </subcellularLocation>
    <subcellularLocation>
        <location evidence="55">Cytoplasmic vesicle</location>
        <location evidence="55">Autophagosome membrane</location>
        <topology evidence="3">Multi-pass membrane protein</topology>
    </subcellularLocation>
    <subcellularLocation>
        <location evidence="6 8 10 11">Mitochondrion outer membrane</location>
        <topology evidence="3">Multi-pass membrane protein</topology>
    </subcellularLocation>
    <subcellularLocation>
        <location evidence="2">Cell membrane</location>
        <topology evidence="3">Multi-pass membrane protein</topology>
    </subcellularLocation>
    <text evidence="2 10 47 53 54 55 60 71">In response to double-stranded DNA stimulation, translocates from the endoplasmic reticulum through the endoplasmic reticulum-Golgi intermediate compartment and Golgi to post-Golgi vesicles, where the kinase TBK1 is recruited (PubMed:19433799, PubMed:29694889, PubMed:30842653, PubMed:30842659). Upon cGAMP-binding, translocates to the endoplasmic reticulum-Golgi intermediate compartment (ERGIC) in a process that is dependent on COPII vesicles; STING1-containing ERGIC serves as a membrane source for LC3 lipidation, which is a key step in autophagosome biogenesis (PubMed:30842662, PubMed:37832545). Localizes in the lysosome membrane in a TMEM203-dependent manner (By similarity).</text>
</comment>
<comment type="tissue specificity">
    <text evidence="6 7 27">Ubiquitously expressed (PubMed:18724357, PubMed:18818105). Expressed in skin endothelial cells, alveolar type 2 pneumocytes, bronchial epithelium and alveolar macrophages (PubMed:25029335).</text>
</comment>
<comment type="domain">
    <text evidence="1 16 17 18 19 20">In absence of cGAMP, the transmembrane and cytoplasmic regions interact to form an integrated, domain-swapped dimeric assembly (By similarity). In absence of cyclic nucleotide (c-di-GMP or cGAMP), the protein is autoinhibited by an intramolecular interaction between the cyclic dinucleotide-binding domain (CBD) and the C-terminal tail (CTT) (PubMed:22579474, PubMed:22705373, PubMed:22728658, PubMed:22728659, PubMed:22728660). Following cGAMP-binding, the cyclic dinucleotide-binding domain (CBD) is closed, leading to a 180 degrees rotation of the CBD domain relative to the transmembrane domain. This rotation is coupled to a conformational change in a loop on the side of the CBD dimer, which leads to the formation of the STING1 tetramer and higher-order oligomers through side-by-side packing (By similarity). The N-terminal part of the CBD region was initially though to contain a fifth transmembrane region (TM5) but is part of the folded, soluble CBD (PubMed:22579474, PubMed:22705373, PubMed:22728658, PubMed:22728659, PubMed:22728660).</text>
</comment>
<comment type="domain">
    <text evidence="33">The pLxIS motif constitutes an IRF3-binding motif: following phosphorylation by TBK1, the phosphorylated pLxIS motif of STING1 recruits IRF3 (PubMed:25636800). IRF3 is then phosphorylated and activated by TBK1 to induce type-I interferons and other cytokines (PubMed:25636800).</text>
</comment>
<comment type="domain">
    <text evidence="60">The N-terminal domain interacts with glycerophospholipids and phospholipids.</text>
</comment>
<comment type="PTM">
    <text evidence="2 7 10 33 40 53 54 61 71">Phosphorylation by TBK1 leads to activation and production of IFN-beta (PubMed:18818105, PubMed:19433799, PubMed:25636800, PubMed:27302953, PubMed:30842653, PubMed:30842659). Following cyclic nucleotide (c-di-GMP or cGAMP)-binding, activation and translocation from the endoplasmic reticulum, STING1 is phosphorylated by TBK1 at Ser-366 in the pLxIS motif (PubMed:25636800, PubMed:32690950). The phosphorylated pLxIS motif constitutes an IRF3-binding motif, leading to recruitment of the transcription factor IRF3 to induce type-I interferons and other cytokines (PubMed:25636800). The phosphorylated pLxIS motif facilitates SENP2 recruitment during late phase of viral infection (By similarity). Phosphorylated on tyrosine residues upon MHC-II aggregation (By similarity). Dephosphorylation by PPP6C leads to inactivation and decreased production of IFN-beta (PubMed:32753499). Phosphorylation at Ser-358 is also required to activate IRF3 (PubMed:25636800). Phosphorylation at Ser-355 by MAP3K7/TAK1 facilitates its interaction with STEEP1, promoting STING1 translocation to COPII vesicles (PubMed:37832545).</text>
</comment>
<comment type="PTM">
    <text evidence="2 8 10 13 29 41 43 56 59 72 73">Ubiquitinated (PubMed:19285439, PubMed:19433799, PubMed:21074459, PubMed:25254379). Ubiquitinated via 'Lys-63'-linked ubiquitin chains in response to double-stranded DNA treatment, leading to relocalization to autophagosomes and subsequent degradation; this process is dependent on SQSTM1 (By similarity). 'Lys-63'-linked ubiquitination mediated by TRIM56 at Lys-150 promotes homodimerization and recruitment of the antiviral kinase TBK1 and subsequent production of IFN-beta (PubMed:21074459). 'Lys-48'-linked polyubiquitination at Lys-150 occurring after viral infection is mediated by RNF5 and leads to proteasomal degradation (PubMed:19285439). 'Lys-11'-linked polyubiquitination at Lys-150 by RNF26 leads to stabilize STING1: it protects STING1 from RNF5-mediated 'Lys-48'-linked polyubiquitination (PubMed:25254379). 'Lys-33'-linked and 'Lys-48'-linked deubiquitinated by USP20; leading to its stabilization and promotion of innate antiviral response (PubMed:27801882). 'Lys-48'-linked deubiquitinated by USP44; leading to its stabilization and promotion of innate antiviral response (PubMed:31968013). Deubiquitinated by USP13; leading to inhibition of innate antiviral response (PubMed:28534493). 'Lys-63'-linked deubiquitinated by USP49; leading to inhibition of the subsequent recruitment of TBK1 to the signaling complex (PubMed:30943264). 'Lys-63'-linked ubiquitination mediated by RNF39 promotes the activation of the cGAS-STING pathway (PubMed:39255680). MARCHF5-mediated ubiquitination prevents the oxidation-induced polymer formation (PubMed:37916870).</text>
</comment>
<comment type="PTM">
    <text evidence="67">(Microbial infection) Deubiquitinated by Epstein-Barr virus BPLF1 on both 'Lys-48' and 'Lys-63'-linked ubiquitin chains; leading to inhibition of cGAS-STING signaling.</text>
</comment>
<comment type="PTM">
    <text evidence="2">Sumoylated at Lys-338 by TRIM38 during the early phase of viral infection, promoting its stability by preventing its relocalization to autophagosomes and subsequent degradation. Desumoylated by SENP2 during the late phase of viral infection.</text>
</comment>
<comment type="PTM">
    <text evidence="48">Palmitoylation takes place in the Golgi apparatus and creates a platform for the recruitment of TBK1.</text>
</comment>
<comment type="disease" evidence="27 32 54">
    <disease id="DI-04179">
        <name>STING-associated vasculopathy, infantile-onset</name>
        <acronym>SAVI</acronym>
        <description>An autoinflammatory disease characterized by early-onset systemic inflammation and cutaneous vasculopathy, resulting in severe skin lesions. Violaceous, scaling lesions of fingers, toes, nose, cheeks and ears progress to acral necrosis in most of the patients. Some patients have severe interstitial lung disease.</description>
        <dbReference type="MIM" id="615934"/>
    </disease>
    <text>The disease is caused by variants affecting the gene represented in this entry.</text>
</comment>
<comment type="miscellaneous">
    <text evidence="65">The cGAS-STING signaling pathway drives sterile inflammation leading to type I interferon immunopathology in severe COVID-19 disease caused by SARS-CoV-2 virus infection (PubMed:35045565). Tissue damages in the lung and skin lesions are caused by activation of the cGAS-STING signaling leading to aberrant inflammation (PubMed:35045565). Endothelial cell damage is also caused by activation of the cGAS-STING pathway: SARS-CoV-2 infection triggers mitochondrial DNA release into the cytosol (PubMed:35045565). Released mitochondrial DNA is then detected by CGAS, leading to activation of the cGAS-STING pathway, triggering type-I interferon production and autoinflammation (PubMed:35045565).</text>
</comment>
<comment type="similarity">
    <text evidence="80">Belongs to the STING family.</text>
</comment>
<sequence length="379" mass="42193">MPHSSLHPSIPCPRGHGAQKAALVLLSACLVTLWGLGEPPEHTLRYLVLHLASLQLGLLLNGVCSLAEELRHIHSRYRGSYWRTVRACLGCPLRRGALLLLSIYFYYSLPNAVGPPFTWMLALLGLSQALNILLGLKGLAPAEISAVCEKGNFNVAHGLAWSYYIGYLRLILPELQARIRTYNQHYNNLLRGAVSQRLYILLPLDCGVPDNLSMADPNIRFLDKLPQQTGDHAGIKDRVYSNSIYELLENGQRAGTCVLEYATPLQTLFAMSQYSQAGFSREDRLEQAKLFCRTLEDILADAPESQNNCRLIAYQEPADDSSFSLSQEVLRHLRQEEKEEVTVGSLKTSAVPSTSTMSQEPELLISGMEKPLPLRTDFS</sequence>
<proteinExistence type="evidence at protein level"/>
<gene>
    <name evidence="82" type="primary">STING1</name>
    <name evidence="77" type="synonym">ERIS</name>
    <name evidence="75 76" type="synonym">MITA</name>
    <name evidence="74 79" type="synonym">STING</name>
    <name evidence="82" type="synonym">TMEM173</name>
</gene>
<protein>
    <recommendedName>
        <fullName evidence="74">Stimulator of interferon genes protein</fullName>
        <shortName evidence="74 78 79">hSTING</shortName>
    </recommendedName>
    <alternativeName>
        <fullName evidence="77">Endoplasmic reticulum interferon stimulator</fullName>
        <shortName evidence="77">ERIS</shortName>
    </alternativeName>
    <alternativeName>
        <fullName evidence="75 76">Mediator of IRF3 activation</fullName>
        <shortName evidence="75 76">hMITA</shortName>
    </alternativeName>
    <alternativeName>
        <fullName evidence="80">Transmembrane protein 173</fullName>
    </alternativeName>
</protein>
<evidence type="ECO:0000250" key="1">
    <source>
        <dbReference type="UniProtKB" id="E1C7U0"/>
    </source>
</evidence>
<evidence type="ECO:0000250" key="2">
    <source>
        <dbReference type="UniProtKB" id="Q3TBT3"/>
    </source>
</evidence>
<evidence type="ECO:0000255" key="3"/>
<evidence type="ECO:0000256" key="4">
    <source>
        <dbReference type="SAM" id="MobiDB-lite"/>
    </source>
</evidence>
<evidence type="ECO:0000269" key="5">
    <source>
    </source>
</evidence>
<evidence type="ECO:0000269" key="6">
    <source>
    </source>
</evidence>
<evidence type="ECO:0000269" key="7">
    <source>
    </source>
</evidence>
<evidence type="ECO:0000269" key="8">
    <source>
    </source>
</evidence>
<evidence type="ECO:0000269" key="9">
    <source>
    </source>
</evidence>
<evidence type="ECO:0000269" key="10">
    <source>
    </source>
</evidence>
<evidence type="ECO:0000269" key="11">
    <source>
    </source>
</evidence>
<evidence type="ECO:0000269" key="12">
    <source>
    </source>
</evidence>
<evidence type="ECO:0000269" key="13">
    <source>
    </source>
</evidence>
<evidence type="ECO:0000269" key="14">
    <source>
    </source>
</evidence>
<evidence type="ECO:0000269" key="15">
    <source>
    </source>
</evidence>
<evidence type="ECO:0000269" key="16">
    <source>
    </source>
</evidence>
<evidence type="ECO:0000269" key="17">
    <source>
    </source>
</evidence>
<evidence type="ECO:0000269" key="18">
    <source>
    </source>
</evidence>
<evidence type="ECO:0000269" key="19">
    <source>
    </source>
</evidence>
<evidence type="ECO:0000269" key="20">
    <source>
    </source>
</evidence>
<evidence type="ECO:0000269" key="21">
    <source>
    </source>
</evidence>
<evidence type="ECO:0000269" key="22">
    <source>
    </source>
</evidence>
<evidence type="ECO:0000269" key="23">
    <source>
    </source>
</evidence>
<evidence type="ECO:0000269" key="24">
    <source>
    </source>
</evidence>
<evidence type="ECO:0000269" key="25">
    <source>
    </source>
</evidence>
<evidence type="ECO:0000269" key="26">
    <source>
    </source>
</evidence>
<evidence type="ECO:0000269" key="27">
    <source>
    </source>
</evidence>
<evidence type="ECO:0000269" key="28">
    <source>
    </source>
</evidence>
<evidence type="ECO:0000269" key="29">
    <source>
    </source>
</evidence>
<evidence type="ECO:0000269" key="30">
    <source>
    </source>
</evidence>
<evidence type="ECO:0000269" key="31">
    <source>
    </source>
</evidence>
<evidence type="ECO:0000269" key="32">
    <source>
    </source>
</evidence>
<evidence type="ECO:0000269" key="33">
    <source>
    </source>
</evidence>
<evidence type="ECO:0000269" key="34">
    <source>
    </source>
</evidence>
<evidence type="ECO:0000269" key="35">
    <source>
    </source>
</evidence>
<evidence type="ECO:0000269" key="36">
    <source>
    </source>
</evidence>
<evidence type="ECO:0000269" key="37">
    <source>
    </source>
</evidence>
<evidence type="ECO:0000269" key="38">
    <source>
    </source>
</evidence>
<evidence type="ECO:0000269" key="39">
    <source>
    </source>
</evidence>
<evidence type="ECO:0000269" key="40">
    <source>
    </source>
</evidence>
<evidence type="ECO:0000269" key="41">
    <source>
    </source>
</evidence>
<evidence type="ECO:0000269" key="42">
    <source>
    </source>
</evidence>
<evidence type="ECO:0000269" key="43">
    <source>
    </source>
</evidence>
<evidence type="ECO:0000269" key="44">
    <source>
    </source>
</evidence>
<evidence type="ECO:0000269" key="45">
    <source>
    </source>
</evidence>
<evidence type="ECO:0000269" key="46">
    <source>
    </source>
</evidence>
<evidence type="ECO:0000269" key="47">
    <source>
    </source>
</evidence>
<evidence type="ECO:0000269" key="48">
    <source>
    </source>
</evidence>
<evidence type="ECO:0000269" key="49">
    <source>
    </source>
</evidence>
<evidence type="ECO:0000269" key="50">
    <source>
    </source>
</evidence>
<evidence type="ECO:0000269" key="51">
    <source>
    </source>
</evidence>
<evidence type="ECO:0000269" key="52">
    <source>
    </source>
</evidence>
<evidence type="ECO:0000269" key="53">
    <source>
    </source>
</evidence>
<evidence type="ECO:0000269" key="54">
    <source>
    </source>
</evidence>
<evidence type="ECO:0000269" key="55">
    <source>
    </source>
</evidence>
<evidence type="ECO:0000269" key="56">
    <source>
    </source>
</evidence>
<evidence type="ECO:0000269" key="57">
    <source>
    </source>
</evidence>
<evidence type="ECO:0000269" key="58">
    <source>
    </source>
</evidence>
<evidence type="ECO:0000269" key="59">
    <source>
    </source>
</evidence>
<evidence type="ECO:0000269" key="60">
    <source>
    </source>
</evidence>
<evidence type="ECO:0000269" key="61">
    <source>
    </source>
</evidence>
<evidence type="ECO:0000269" key="62">
    <source>
    </source>
</evidence>
<evidence type="ECO:0000269" key="63">
    <source>
    </source>
</evidence>
<evidence type="ECO:0000269" key="64">
    <source>
    </source>
</evidence>
<evidence type="ECO:0000269" key="65">
    <source>
    </source>
</evidence>
<evidence type="ECO:0000269" key="66">
    <source>
    </source>
</evidence>
<evidence type="ECO:0000269" key="67">
    <source>
    </source>
</evidence>
<evidence type="ECO:0000269" key="68">
    <source>
    </source>
</evidence>
<evidence type="ECO:0000269" key="69">
    <source>
    </source>
</evidence>
<evidence type="ECO:0000269" key="70">
    <source>
    </source>
</evidence>
<evidence type="ECO:0000269" key="71">
    <source>
    </source>
</evidence>
<evidence type="ECO:0000269" key="72">
    <source>
    </source>
</evidence>
<evidence type="ECO:0000269" key="73">
    <source>
    </source>
</evidence>
<evidence type="ECO:0000303" key="74">
    <source>
    </source>
</evidence>
<evidence type="ECO:0000303" key="75">
    <source>
    </source>
</evidence>
<evidence type="ECO:0000303" key="76">
    <source>
    </source>
</evidence>
<evidence type="ECO:0000303" key="77">
    <source>
    </source>
</evidence>
<evidence type="ECO:0000303" key="78">
    <source>
    </source>
</evidence>
<evidence type="ECO:0000303" key="79">
    <source>
    </source>
</evidence>
<evidence type="ECO:0000305" key="80"/>
<evidence type="ECO:0000305" key="81">
    <source>
    </source>
</evidence>
<evidence type="ECO:0000312" key="82">
    <source>
        <dbReference type="HGNC" id="HGNC:27962"/>
    </source>
</evidence>
<evidence type="ECO:0007744" key="83">
    <source>
        <dbReference type="PDB" id="4EF4"/>
    </source>
</evidence>
<evidence type="ECO:0007744" key="84">
    <source>
        <dbReference type="PDB" id="4EF5"/>
    </source>
</evidence>
<evidence type="ECO:0007744" key="85">
    <source>
        <dbReference type="PDB" id="4EMT"/>
    </source>
</evidence>
<evidence type="ECO:0007744" key="86">
    <source>
        <dbReference type="PDB" id="4EMU"/>
    </source>
</evidence>
<evidence type="ECO:0007744" key="87">
    <source>
        <dbReference type="PDB" id="4F5D"/>
    </source>
</evidence>
<evidence type="ECO:0007744" key="88">
    <source>
        <dbReference type="PDB" id="4F5E"/>
    </source>
</evidence>
<evidence type="ECO:0007744" key="89">
    <source>
        <dbReference type="PDB" id="4F5W"/>
    </source>
</evidence>
<evidence type="ECO:0007744" key="90">
    <source>
        <dbReference type="PDB" id="4F5Y"/>
    </source>
</evidence>
<evidence type="ECO:0007744" key="91">
    <source>
        <dbReference type="PDB" id="4F9E"/>
    </source>
</evidence>
<evidence type="ECO:0007744" key="92">
    <source>
        <dbReference type="PDB" id="4F9G"/>
    </source>
</evidence>
<evidence type="ECO:0007744" key="93">
    <source>
        <dbReference type="PDB" id="4KSY"/>
    </source>
</evidence>
<evidence type="ECO:0007744" key="94">
    <source>
        <dbReference type="PDB" id="4LOH"/>
    </source>
</evidence>
<evidence type="ECO:0007744" key="95">
    <source>
        <dbReference type="PDB" id="4LOI"/>
    </source>
</evidence>
<evidence type="ECO:0007744" key="96">
    <source>
        <dbReference type="PDB" id="4QXO"/>
    </source>
</evidence>
<evidence type="ECO:0007744" key="97">
    <source>
        <dbReference type="PDB" id="4QXP"/>
    </source>
</evidence>
<evidence type="ECO:0007744" key="98">
    <source>
        <dbReference type="PDB" id="4QXQ"/>
    </source>
</evidence>
<evidence type="ECO:0007744" key="99">
    <source>
        <dbReference type="PDB" id="4QXR"/>
    </source>
</evidence>
<evidence type="ECO:0007744" key="100">
    <source>
        <dbReference type="PDB" id="5BQX"/>
    </source>
</evidence>
<evidence type="ECO:0007744" key="101">
    <source>
        <dbReference type="PDB" id="5JEJ"/>
    </source>
</evidence>
<evidence type="ECO:0007744" key="102">
    <source>
        <dbReference type="PDB" id="6MX0"/>
    </source>
</evidence>
<evidence type="ECO:0007744" key="103">
    <source>
        <dbReference type="PDB" id="6MX3"/>
    </source>
</evidence>
<evidence type="ECO:0007744" key="104">
    <source>
        <dbReference type="PDB" id="6MXE"/>
    </source>
</evidence>
<evidence type="ECO:0007744" key="105">
    <source>
        <dbReference type="PDB" id="7SII"/>
    </source>
</evidence>
<evidence type="ECO:0007744" key="106">
    <source>
        <dbReference type="PDB" id="8GJX"/>
    </source>
</evidence>
<evidence type="ECO:0007829" key="107">
    <source>
        <dbReference type="PDB" id="4EMT"/>
    </source>
</evidence>
<evidence type="ECO:0007829" key="108">
    <source>
        <dbReference type="PDB" id="5JEJ"/>
    </source>
</evidence>
<evidence type="ECO:0007829" key="109">
    <source>
        <dbReference type="PDB" id="6MX3"/>
    </source>
</evidence>
<evidence type="ECO:0007829" key="110">
    <source>
        <dbReference type="PDB" id="6UKM"/>
    </source>
</evidence>
<evidence type="ECO:0007829" key="111">
    <source>
        <dbReference type="PDB" id="6UKZ"/>
    </source>
</evidence>
<evidence type="ECO:0007829" key="112">
    <source>
        <dbReference type="PDB" id="6XNP"/>
    </source>
</evidence>
<evidence type="ECO:0007829" key="113">
    <source>
        <dbReference type="PDB" id="7SII"/>
    </source>
</evidence>
<evidence type="ECO:0007829" key="114">
    <source>
        <dbReference type="PDB" id="7X9Q"/>
    </source>
</evidence>
<evidence type="ECO:0007829" key="115">
    <source>
        <dbReference type="PDB" id="8FLM"/>
    </source>
</evidence>
<feature type="chain" id="PRO_0000271116" description="Stimulator of interferon genes protein">
    <location>
        <begin position="1"/>
        <end position="379"/>
    </location>
</feature>
<feature type="topological domain" description="Cytoplasmic" evidence="54">
    <location>
        <begin position="1"/>
        <end position="17"/>
    </location>
</feature>
<feature type="transmembrane region" description="Helical; Name=1" evidence="54">
    <location>
        <begin position="18"/>
        <end position="34"/>
    </location>
</feature>
<feature type="topological domain" description="Lumenal" evidence="54">
    <location>
        <begin position="35"/>
        <end position="44"/>
    </location>
</feature>
<feature type="transmembrane region" description="Helical; Name=2" evidence="54">
    <location>
        <begin position="45"/>
        <end position="69"/>
    </location>
</feature>
<feature type="topological domain" description="Cytoplasmic" evidence="54">
    <location>
        <begin position="70"/>
        <end position="91"/>
    </location>
</feature>
<feature type="transmembrane region" description="Helical; Name=3" evidence="54">
    <location>
        <begin position="92"/>
        <end position="106"/>
    </location>
</feature>
<feature type="topological domain" description="Lumenal" evidence="54">
    <location>
        <begin position="107"/>
        <end position="116"/>
    </location>
</feature>
<feature type="transmembrane region" description="Helical; Name=4" evidence="54">
    <location>
        <begin position="117"/>
        <end position="134"/>
    </location>
</feature>
<feature type="topological domain" description="Cytoplasmic" evidence="54">
    <location>
        <begin position="135"/>
        <end position="379"/>
    </location>
</feature>
<feature type="region of interest" description="Mediates interaction with ZDHHC1 and ZDHHC11" evidence="30 42">
    <location>
        <begin position="1"/>
        <end position="190"/>
    </location>
</feature>
<feature type="region of interest" description="Cyclic dinucleotide-binding domain (CBD)" evidence="17">
    <location>
        <begin position="153"/>
        <end position="340"/>
    </location>
</feature>
<feature type="region of interest" description="C-terminal tail (CTT)" evidence="17">
    <location>
        <begin position="340"/>
        <end position="379"/>
    </location>
</feature>
<feature type="region of interest" description="Disordered" evidence="4">
    <location>
        <begin position="341"/>
        <end position="370"/>
    </location>
</feature>
<feature type="short sequence motif" description="pLxIS motif" evidence="33">
    <location>
        <begin position="363"/>
        <end position="366"/>
    </location>
</feature>
<feature type="compositionally biased region" description="Polar residues" evidence="4">
    <location>
        <begin position="345"/>
        <end position="359"/>
    </location>
</feature>
<feature type="binding site" evidence="26 66 94 105">
    <location>
        <position position="162"/>
    </location>
    <ligand>
        <name>2',3'-cGAMP</name>
        <dbReference type="ChEBI" id="CHEBI:143093"/>
    </ligand>
</feature>
<feature type="binding site" evidence="20 90">
    <location>
        <position position="162"/>
    </location>
    <ligand>
        <name>3',3'-c-di-GMP</name>
        <dbReference type="ChEBI" id="CHEBI:58805"/>
    </ligand>
</feature>
<feature type="binding site" evidence="25 26 93 94">
    <location>
        <position position="167"/>
    </location>
    <ligand>
        <name>2',3'-cGAMP</name>
        <dbReference type="ChEBI" id="CHEBI:143093"/>
    </ligand>
</feature>
<feature type="binding site" evidence="69 106">
    <location>
        <position position="167"/>
    </location>
    <ligand>
        <name>2',3'-cUAMP</name>
        <dbReference type="ChEBI" id="CHEBI:228269"/>
    </ligand>
</feature>
<feature type="binding site" evidence="16 17 18 19 20 83 85 87 90 92">
    <location>
        <position position="167"/>
    </location>
    <ligand>
        <name>3',3'-c-di-GMP</name>
        <dbReference type="ChEBI" id="CHEBI:58805"/>
    </ligand>
</feature>
<feature type="binding site" evidence="18 19 20 85 87 90">
    <location>
        <begin position="238"/>
        <end position="241"/>
    </location>
    <ligand>
        <name>3',3'-c-di-GMP</name>
        <dbReference type="ChEBI" id="CHEBI:58805"/>
    </ligand>
</feature>
<feature type="binding site" evidence="25 26 66 93 94 105">
    <location>
        <position position="238"/>
    </location>
    <ligand>
        <name>2',3'-cGAMP</name>
        <dbReference type="ChEBI" id="CHEBI:143093"/>
    </ligand>
</feature>
<feature type="binding site" evidence="69 106">
    <location>
        <position position="238"/>
    </location>
    <ligand>
        <name>2',3'-cUAMP</name>
        <dbReference type="ChEBI" id="CHEBI:228269"/>
    </ligand>
</feature>
<feature type="binding site" evidence="25 26 66 93 94 105">
    <location>
        <position position="263"/>
    </location>
    <ligand>
        <name>2',3'-cGAMP</name>
        <dbReference type="ChEBI" id="CHEBI:143093"/>
    </ligand>
</feature>
<feature type="binding site" evidence="69 106">
    <location>
        <position position="263"/>
    </location>
    <ligand>
        <name>2',3'-cUAMP</name>
        <dbReference type="ChEBI" id="CHEBI:228269"/>
    </ligand>
</feature>
<feature type="binding site" evidence="16 17 18 20 83 85 90 92">
    <location>
        <position position="263"/>
    </location>
    <ligand>
        <name>3',3'-c-di-GMP</name>
        <dbReference type="ChEBI" id="CHEBI:58805"/>
    </ligand>
</feature>
<feature type="modified residue" description="Phosphothreonine" evidence="71">
    <location>
        <position position="229"/>
    </location>
</feature>
<feature type="modified residue" description="Phosphoserine" evidence="71">
    <location>
        <position position="241"/>
    </location>
</feature>
<feature type="modified residue" description="Phosphothreonine" evidence="71">
    <location>
        <position position="354"/>
    </location>
</feature>
<feature type="modified residue" description="Phosphoserine; by MAP3K7" evidence="71">
    <location>
        <position position="355"/>
    </location>
</feature>
<feature type="modified residue" description="Phosphothreonine" evidence="71">
    <location>
        <position position="356"/>
    </location>
</feature>
<feature type="modified residue" description="Phosphoserine; by TBK1" evidence="7 33">
    <location>
        <position position="358"/>
    </location>
</feature>
<feature type="modified residue" description="Phosphoserine; by TBK1" evidence="33 40 61">
    <location>
        <position position="366"/>
    </location>
</feature>
<feature type="lipid moiety-binding region" description="S-palmitoyl cysteine" evidence="2">
    <location>
        <position position="88"/>
    </location>
</feature>
<feature type="lipid moiety-binding region" description="S-palmitoyl cysteine" evidence="48">
    <location>
        <position position="91"/>
    </location>
</feature>
<feature type="cross-link" description="Glycyl lysine isopeptide (Lys-Gly) (interchain with G-Cter in ubiquitin)" evidence="59">
    <location>
        <position position="20"/>
    </location>
</feature>
<feature type="cross-link" description="Glycyl lysine isopeptide (Lys-Gly) (interchain with G-Cter in ubiquitin)" evidence="8 13">
    <location>
        <position position="150"/>
    </location>
</feature>
<feature type="cross-link" description="Glycyl lysine isopeptide (Lys-Gly) (interchain with G-Cter in ubiquitin)" evidence="59">
    <location>
        <position position="236"/>
    </location>
</feature>
<feature type="cross-link" description="Glycyl lysine isopeptide (Lys-Gly) (interchain with G-Cter in SUMO)" evidence="2">
    <location>
        <position position="338"/>
    </location>
</feature>
<feature type="sequence variant" id="VAR_029863" description="In dbSNP:rs11554776.">
    <original>R</original>
    <variation>H</variation>
    <location>
        <position position="71"/>
    </location>
</feature>
<feature type="sequence variant" id="VAR_071878" description="In SAVI; dbSNP:rs587777611." evidence="27">
    <original>V</original>
    <variation>L</variation>
    <location>
        <position position="147"/>
    </location>
</feature>
<feature type="sequence variant" id="VAR_071879" description="In SAVI; dbSNP:rs587777609." evidence="27">
    <original>N</original>
    <variation>S</variation>
    <location>
        <position position="154"/>
    </location>
</feature>
<feature type="sequence variant" id="VAR_071880" description="In SAVI; constitutively active mutant that promotes the production of type I interferon in absence of cGAMP ligand; dbSNP:rs587777610." evidence="27 32 54">
    <original>V</original>
    <variation>M</variation>
    <location>
        <position position="155"/>
    </location>
</feature>
<feature type="sequence variant" id="VAR_029864" description="Activated by both 2'-3' linked cGAMP and 3'-3' linked cGAMP; dbSNP:rs1131769." evidence="5 37">
    <original>H</original>
    <variation>R</variation>
    <location>
        <position position="232"/>
    </location>
</feature>
<feature type="sequence variant" id="VAR_081660" description="Found in a 9-month-old patient who died following a fever and severe neck abscess without indication of any severe bacterial infection; likely pathogenic; may affect splicing; constitutively active mutant that promotes the production of type I interferon in absence of cyclic dinucleotide ligand; localizes to the perinuclear region in absence of cyclic dinucleotide ligand." evidence="47">
    <original>R</original>
    <variation>S</variation>
    <location>
        <position position="284"/>
    </location>
</feature>
<feature type="sequence variant" id="VAR_029865" description="In dbSNP:rs7380824.">
    <original>R</original>
    <variation>Q</variation>
    <location>
        <position position="293"/>
    </location>
</feature>
<feature type="mutagenesis site" description="Abolished ability to induce the production of type I interferon." evidence="54">
    <original>I</original>
    <variation>Q</variation>
    <location>
        <position position="10"/>
    </location>
</feature>
<feature type="mutagenesis site" description="Abolished ability to induce the production of type I interferon." evidence="54">
    <original>R</original>
    <variation>A</variation>
    <location>
        <position position="14"/>
    </location>
</feature>
<feature type="mutagenesis site" description="Does not affect amount of ubiquitination." evidence="13">
    <original>K</original>
    <variation>R</variation>
    <location>
        <position position="20"/>
    </location>
</feature>
<feature type="mutagenesis site" description="Reduced homooligomerization and activation in presence of coumpond C53." evidence="66">
    <original>L</original>
    <variation>A</variation>
    <location>
        <position position="26"/>
    </location>
</feature>
<feature type="mutagenesis site" description="Reduced homooligomerization and activation in presence of coumpond C53." evidence="66">
    <original>L</original>
    <variation>A</variation>
    <location>
        <position position="30"/>
    </location>
</feature>
<feature type="mutagenesis site" description="Reduced homooligomerization and activation in presence of coumpond C53." evidence="66">
    <original>L</original>
    <variation>A</variation>
    <location>
        <position position="44"/>
    </location>
</feature>
<feature type="mutagenesis site" description="Abolished ability to induce the production of type I interferon." evidence="54">
    <original>E</original>
    <variation>A</variation>
    <location>
        <position position="68"/>
    </location>
</feature>
<feature type="mutagenesis site" description="Abolished ability to induce the production of type I interferon." evidence="54">
    <original>E</original>
    <variation>A</variation>
    <location>
        <position position="69"/>
    </location>
</feature>
<feature type="mutagenesis site" description="Abolishes the endoplasmic reticulum location." evidence="10">
    <original>RYR</original>
    <variation>AYA</variation>
    <location>
        <begin position="76"/>
        <end position="78"/>
    </location>
</feature>
<feature type="mutagenesis site" description="Abolished inhibition by small-molecule H-151; abolished palmitoylation." evidence="48">
    <original>C</original>
    <variation>S</variation>
    <location>
        <position position="91"/>
    </location>
</feature>
<feature type="mutagenesis site" description="Reduced homooligomerization and activation in presence of coumpond C53." evidence="66">
    <original>Y</original>
    <variation>A</variation>
    <location>
        <position position="104"/>
    </location>
</feature>
<feature type="mutagenesis site" description="Does not affect amount of ubiquitination." evidence="13">
    <original>K</original>
    <variation>R</variation>
    <location>
        <position position="137"/>
    </location>
</feature>
<feature type="mutagenesis site" description="Abolishes ubiquitination, homodimerization and subsequent production of IFN-beta." evidence="8 13 29">
    <original>K</original>
    <variation>R</variation>
    <location>
        <position position="150"/>
    </location>
</feature>
<feature type="mutagenesis site" description="Partially constitutively active mutant that promotes the production of type I interferon in absence of cGAMP ligand." evidence="54">
    <original>F</original>
    <variation>A</variation>
    <location>
        <position position="153"/>
    </location>
</feature>
<feature type="mutagenesis site" description="Constitutively active mutant that promotes the production of type I interferon in absence of cGAMP ligand." evidence="54">
    <original>G</original>
    <variation>A</variation>
    <location>
        <position position="158"/>
    </location>
</feature>
<feature type="mutagenesis site" description="Abolished homodimerization and activation." evidence="71">
    <original>G</original>
    <variation>E</variation>
    <location>
        <position position="158"/>
    </location>
</feature>
<feature type="mutagenesis site" description="Partially constitutively active mutant that promotes the production of type I interferon in absence of cGAMP ligand." evidence="54">
    <original>G</original>
    <variation>S</variation>
    <variation>V</variation>
    <location>
        <position position="158"/>
    </location>
</feature>
<feature type="mutagenesis site" description="Slight decrease in c-di-GMP-binding. Renders the enzyme sensitive to 5,6-dimethylxanthenone 4-acetic acid (DMXAA) drug, leading to activation of the STING1 pathway. Renders the enzyme sensitive to 5,6-dimethylxanthenone 4-acetic acid (DMXAA) drug; when associated with I-266." evidence="18 26 28 39">
    <original>S</original>
    <variation>A</variation>
    <location>
        <position position="162"/>
    </location>
</feature>
<feature type="mutagenesis site" description="Slight decrease in c-di-GMP-binding." evidence="18">
    <original>G</original>
    <variation>S</variation>
    <location>
        <position position="166"/>
    </location>
</feature>
<feature type="mutagenesis site" description="Abolishes the endoplasmic reticulum location." evidence="10">
    <original>RIR</original>
    <variation>AIA</variation>
    <location>
        <begin position="178"/>
        <end position="180"/>
    </location>
</feature>
<feature type="mutagenesis site" description="Renders the enzyme sensitive to 5,6-dimethylxanthenone 4-acetic acid (DMXAA) drug, leading to activation of the STING1 pathway." evidence="28">
    <original>G</original>
    <variation>I</variation>
    <location>
        <position position="230"/>
    </location>
</feature>
<feature type="mutagenesis site" description="Loss of deubiquitination by USP44." evidence="59">
    <original>K</original>
    <variation>R</variation>
    <location>
        <position position="236"/>
    </location>
</feature>
<feature type="mutagenesis site" description="Strong decrease in cGAMP-binding without affecting interaction with TBK1. Abolished ability to induce autophagy." evidence="53 55">
    <original>RVY</original>
    <variation>AVA</variation>
    <location>
        <begin position="238"/>
        <end position="240"/>
    </location>
</feature>
<feature type="mutagenesis site" description="Abolished cGAMP-binding. Abolished ability to induce autophagy." evidence="26 55">
    <original>R</original>
    <variation>A</variation>
    <location>
        <position position="238"/>
    </location>
</feature>
<feature type="mutagenesis site" description="Abolished cGAMP-binding." evidence="26">
    <original>Y</original>
    <variation>A</variation>
    <location>
        <position position="240"/>
    </location>
</feature>
<feature type="mutagenesis site" description="Strong decrease in c-di-GMP-binding." evidence="18">
    <original>Y</original>
    <variation>S</variation>
    <location>
        <position position="240"/>
    </location>
</feature>
<feature type="mutagenesis site" description="Strong decrease in c-di-GMP and cGAMP-binding." evidence="18 26">
    <original>N</original>
    <variation>A</variation>
    <location>
        <position position="242"/>
    </location>
</feature>
<feature type="mutagenesis site" description="Strong decrease in c-di-GMP and cGAMP-binding." evidence="18 26">
    <original>E</original>
    <variation>A</variation>
    <location>
        <position position="260"/>
    </location>
</feature>
<feature type="mutagenesis site" description="Strong decrease in c-di-GMP-binding." evidence="18">
    <original>T</original>
    <variation>A</variation>
    <location>
        <position position="263"/>
    </location>
</feature>
<feature type="mutagenesis site" description="Strong decrease in c-di-GMP-binding." evidence="18">
    <original>P</original>
    <variation>A</variation>
    <location>
        <position position="264"/>
    </location>
</feature>
<feature type="mutagenesis site" description="Renders the enzyme sensitive to 5,6-dimethylxanthenone 4-acetic acid (DMXAA) drug, leading to activation of the STING1 pathway; when associated with A-162." evidence="28">
    <original>Q</original>
    <variation>I</variation>
    <location>
        <position position="266"/>
    </location>
</feature>
<feature type="mutagenesis site" description="Strong decrease in c-di-GMP-binding." evidence="18">
    <original>T</original>
    <variation>A</variation>
    <location>
        <position position="267"/>
    </location>
</feature>
<feature type="mutagenesis site" description="In AQQA mutant reduced homooligomerization and ability to induce type I interferons. Abrogates interaction with STEEP." evidence="60 70">
    <original>QYSQA</original>
    <variation>AYSQQ</variation>
    <location>
        <begin position="273"/>
        <end position="277"/>
    </location>
</feature>
<feature type="mutagenesis site" description="Abolished translocation from the endoplasmic reticulum in response to cGAMP-binding. Reduced phosphorylation by TBK1." evidence="53 54">
    <original>Q</original>
    <variation>A</variation>
    <location>
        <position position="273"/>
    </location>
</feature>
<feature type="mutagenesis site" description="Abolished translocation from the endoplasmic reticulum in response to cGAMP-binding. Reduced phosphorylation by TBK1." evidence="53 54">
    <original>A</original>
    <variation>Q</variation>
    <location>
        <position position="277"/>
    </location>
</feature>
<feature type="mutagenesis site" description="Induces a decrease in phosphorylation by TBK1." evidence="7">
    <original>SLS</original>
    <variation>ALA</variation>
    <location>
        <begin position="324"/>
        <end position="326"/>
    </location>
</feature>
<feature type="mutagenesis site" description="Abolished ability to induce autophagy. Abolished interaction with SEC24C." evidence="55">
    <original>LR</original>
    <variation>AA</variation>
    <location>
        <begin position="333"/>
        <end position="334"/>
    </location>
</feature>
<feature type="mutagenesis site" description="Does not affect ability to activate IRF3." evidence="15">
    <original>V</original>
    <variation>A</variation>
    <location>
        <position position="341"/>
    </location>
</feature>
<feature type="mutagenesis site" description="Does not affect ability to activate IRF3." evidence="15">
    <original>T</original>
    <variation>A</variation>
    <location>
        <position position="342"/>
    </location>
</feature>
<feature type="mutagenesis site" description="Impaired ability to induce the production of type I interferon." evidence="71">
    <original>S</original>
    <variation>A</variation>
    <location>
        <position position="355"/>
    </location>
</feature>
<feature type="mutagenesis site" description="Decreased phosphorylation by TBK1, leading to reduced ability to activate IRF3." evidence="7 15 33 40 46">
    <original>S</original>
    <variation>A</variation>
    <location>
        <position position="358"/>
    </location>
</feature>
<feature type="mutagenesis site" description="Does not affect ability to activate IRF3." evidence="15">
    <original>E</original>
    <variation>A</variation>
    <location>
        <position position="360"/>
    </location>
</feature>
<feature type="mutagenesis site" description="Slightly affects ability to induce the production of type I interferon." evidence="40">
    <original>E</original>
    <variation>A</variation>
    <location>
        <position position="362"/>
    </location>
</feature>
<feature type="mutagenesis site" description="Abolished ability to induce the production of type I interferon." evidence="40">
    <original>L</original>
    <variation>A</variation>
    <location>
        <position position="363"/>
    </location>
</feature>
<feature type="mutagenesis site" description="Slightly affects ability to induce the production of type I interferon." evidence="40">
    <original>L</original>
    <variation>A</variation>
    <location>
        <position position="364"/>
    </location>
</feature>
<feature type="mutagenesis site" description="Abolished ability to induce the production of type I interferon." evidence="40">
    <original>I</original>
    <variation>A</variation>
    <location>
        <position position="365"/>
    </location>
</feature>
<feature type="mutagenesis site" description="Induces a decrease in phosphorylation by TBK1. Abolished ability to activate IRF3." evidence="15 33 40">
    <original>S</original>
    <variation>A</variation>
    <variation>N</variation>
    <variation>C</variation>
    <location>
        <position position="366"/>
    </location>
</feature>
<feature type="mutagenesis site" description="Phosphomimetic mutant; retains some ability to activate IRF3. It probably incompletely mimics phosphorylation." evidence="33">
    <original>S</original>
    <variation>D</variation>
    <location>
        <position position="366"/>
    </location>
</feature>
<feature type="mutagenesis site" description="Does not affect ability to activate IRF3." evidence="15">
    <original>G</original>
    <variation>A</variation>
    <location>
        <position position="367"/>
    </location>
</feature>
<feature type="mutagenesis site" description="Abolished ability to induce the production of type I interferon." evidence="53">
    <original>P</original>
    <variation>Q</variation>
    <location>
        <position position="371"/>
    </location>
</feature>
<feature type="mutagenesis site" description="Abolished ability to activate IRF3 and induce the production of type I interferon." evidence="15 53">
    <original>L</original>
    <variation>A</variation>
    <location>
        <position position="374"/>
    </location>
</feature>
<feature type="mutagenesis site" description="Does not affect ability to activate IRF3. Abolished ability to induce the production of type I interferon." evidence="15 53">
    <original>R</original>
    <variation>A</variation>
    <location>
        <position position="375"/>
    </location>
</feature>
<feature type="mutagenesis site" description="Does not affect ability to activate IRF3." evidence="40">
    <original>T</original>
    <variation>A</variation>
    <location>
        <position position="376"/>
    </location>
</feature>
<feature type="mutagenesis site" description="Does not affect ability to activate IRF3." evidence="15">
    <original>D</original>
    <variation>A</variation>
    <location>
        <position position="377"/>
    </location>
</feature>
<feature type="mutagenesis site" description="Does not affect ability to activate IRF3." evidence="40">
    <original>S</original>
    <variation>A</variation>
    <location>
        <position position="379"/>
    </location>
</feature>
<feature type="sequence conflict" description="In Ref. 2; BAF83350." evidence="80" ref="2">
    <original>A</original>
    <variation>T</variation>
    <location>
        <position position="262"/>
    </location>
</feature>
<feature type="sequence conflict" description="In Ref. 2; BAF83350." evidence="80" ref="2">
    <original>L</original>
    <variation>F</variation>
    <location>
        <position position="363"/>
    </location>
</feature>
<feature type="helix" evidence="115">
    <location>
        <begin position="17"/>
        <end position="36"/>
    </location>
</feature>
<feature type="helix" evidence="115">
    <location>
        <begin position="40"/>
        <end position="69"/>
    </location>
</feature>
<feature type="helix" evidence="115">
    <location>
        <begin position="70"/>
        <end position="72"/>
    </location>
</feature>
<feature type="helix" evidence="115">
    <location>
        <begin position="73"/>
        <end position="76"/>
    </location>
</feature>
<feature type="helix" evidence="115">
    <location>
        <begin position="81"/>
        <end position="88"/>
    </location>
</feature>
<feature type="strand" evidence="115">
    <location>
        <begin position="89"/>
        <end position="91"/>
    </location>
</feature>
<feature type="helix" evidence="115">
    <location>
        <begin position="92"/>
        <end position="108"/>
    </location>
</feature>
<feature type="strand" evidence="113">
    <location>
        <begin position="112"/>
        <end position="114"/>
    </location>
</feature>
<feature type="helix" evidence="115">
    <location>
        <begin position="117"/>
        <end position="133"/>
    </location>
</feature>
<feature type="helix" evidence="115">
    <location>
        <begin position="141"/>
        <end position="151"/>
    </location>
</feature>
<feature type="helix" evidence="109">
    <location>
        <begin position="156"/>
        <end position="166"/>
    </location>
</feature>
<feature type="helix" evidence="109">
    <location>
        <begin position="168"/>
        <end position="185"/>
    </location>
</feature>
<feature type="turn" evidence="107">
    <location>
        <begin position="186"/>
        <end position="189"/>
    </location>
</feature>
<feature type="helix" evidence="110">
    <location>
        <begin position="190"/>
        <end position="192"/>
    </location>
</feature>
<feature type="strand" evidence="109">
    <location>
        <begin position="196"/>
        <end position="203"/>
    </location>
</feature>
<feature type="helix" evidence="107">
    <location>
        <begin position="212"/>
        <end position="215"/>
    </location>
</feature>
<feature type="strand" evidence="109">
    <location>
        <begin position="219"/>
        <end position="224"/>
    </location>
</feature>
<feature type="strand" evidence="111">
    <location>
        <begin position="228"/>
        <end position="232"/>
    </location>
</feature>
<feature type="strand" evidence="111">
    <location>
        <begin position="235"/>
        <end position="240"/>
    </location>
</feature>
<feature type="strand" evidence="109">
    <location>
        <begin position="243"/>
        <end position="249"/>
    </location>
</feature>
<feature type="strand" evidence="109">
    <location>
        <begin position="252"/>
        <end position="261"/>
    </location>
</feature>
<feature type="helix" evidence="109">
    <location>
        <begin position="265"/>
        <end position="272"/>
    </location>
</feature>
<feature type="helix" evidence="109">
    <location>
        <begin position="275"/>
        <end position="277"/>
    </location>
</feature>
<feature type="helix" evidence="109">
    <location>
        <begin position="281"/>
        <end position="301"/>
    </location>
</feature>
<feature type="helix" evidence="107">
    <location>
        <begin position="303"/>
        <end position="306"/>
    </location>
</feature>
<feature type="strand" evidence="109">
    <location>
        <begin position="309"/>
        <end position="314"/>
    </location>
</feature>
<feature type="strand" evidence="114">
    <location>
        <begin position="317"/>
        <end position="319"/>
    </location>
</feature>
<feature type="helix" evidence="112">
    <location>
        <begin position="320"/>
        <end position="322"/>
    </location>
</feature>
<feature type="helix" evidence="109">
    <location>
        <begin position="325"/>
        <end position="335"/>
    </location>
</feature>
<feature type="helix" evidence="108">
    <location>
        <begin position="372"/>
        <end position="374"/>
    </location>
</feature>